<organism>
    <name type="scientific">Homo sapiens</name>
    <name type="common">Human</name>
    <dbReference type="NCBI Taxonomy" id="9606"/>
    <lineage>
        <taxon>Eukaryota</taxon>
        <taxon>Metazoa</taxon>
        <taxon>Chordata</taxon>
        <taxon>Craniata</taxon>
        <taxon>Vertebrata</taxon>
        <taxon>Euteleostomi</taxon>
        <taxon>Mammalia</taxon>
        <taxon>Eutheria</taxon>
        <taxon>Euarchontoglires</taxon>
        <taxon>Primates</taxon>
        <taxon>Haplorrhini</taxon>
        <taxon>Catarrhini</taxon>
        <taxon>Hominidae</taxon>
        <taxon>Homo</taxon>
    </lineage>
</organism>
<feature type="chain" id="PRO_0000086035" description="Interleukin-1 receptor-associated kinase 4">
    <location>
        <begin position="1"/>
        <end position="460"/>
    </location>
</feature>
<feature type="domain" description="Death">
    <location>
        <begin position="20"/>
        <end position="104"/>
    </location>
</feature>
<feature type="domain" description="Protein kinase" evidence="2">
    <location>
        <begin position="186"/>
        <end position="454"/>
    </location>
</feature>
<feature type="active site" description="Proton acceptor" evidence="2">
    <location>
        <position position="311"/>
    </location>
</feature>
<feature type="binding site" evidence="2">
    <location>
        <begin position="192"/>
        <end position="200"/>
    </location>
    <ligand>
        <name>ATP</name>
        <dbReference type="ChEBI" id="CHEBI:30616"/>
    </ligand>
</feature>
<feature type="binding site">
    <location>
        <position position="213"/>
    </location>
    <ligand>
        <name>ATP</name>
        <dbReference type="ChEBI" id="CHEBI:30616"/>
    </ligand>
</feature>
<feature type="binding site">
    <location>
        <begin position="313"/>
        <end position="316"/>
    </location>
    <ligand>
        <name>ATP</name>
        <dbReference type="ChEBI" id="CHEBI:30616"/>
    </ligand>
</feature>
<feature type="binding site">
    <location>
        <position position="329"/>
    </location>
    <ligand>
        <name>ATP</name>
        <dbReference type="ChEBI" id="CHEBI:30616"/>
    </ligand>
</feature>
<feature type="modified residue" description="N-acetylmethionine" evidence="31">
    <location>
        <position position="1"/>
    </location>
</feature>
<feature type="modified residue" description="N6-acetyllysine" evidence="30">
    <location>
        <position position="34"/>
    </location>
</feature>
<feature type="modified residue" description="Phosphothreonine" evidence="14 25">
    <location>
        <position position="342"/>
    </location>
</feature>
<feature type="modified residue" description="Phosphothreonine" evidence="12 14 25">
    <location>
        <position position="345"/>
    </location>
</feature>
<feature type="modified residue" description="Phosphoserine" evidence="12 14">
    <location>
        <position position="346"/>
    </location>
</feature>
<feature type="splice variant" id="VSP_041556" description="In isoform 2." evidence="27 28">
    <location>
        <begin position="1"/>
        <end position="124"/>
    </location>
</feature>
<feature type="sequence variant" id="VAR_040588" description="No effect on inhibition of NF-kappa-B activation; no effect on interaction with MYD88; dbSNP:rs56312115." evidence="16 23">
    <original>I</original>
    <variation>V</variation>
    <location>
        <position position="5"/>
    </location>
</feature>
<feature type="sequence variant" id="VAR_072888" description="In IMD67; no effect on inhibition of NF-kappa-B complex activation; loss of interaction with MYD88; decreases protein stability; dbSNP:rs377584435." evidence="17 23">
    <original>R</original>
    <variation>C</variation>
    <location>
        <position position="12"/>
    </location>
</feature>
<feature type="sequence variant" id="VAR_072889" description="Increases inhibition of NF-kappa-B complex activation; decreases interaction with MYD88; decreases protein stability; dbSNP:rs143625818." evidence="23">
    <original>R</original>
    <variation>W</variation>
    <location>
        <position position="20"/>
    </location>
</feature>
<feature type="sequence variant" id="VAR_072890" description="No effect on inhibition of NF-kappa-B activation; no effect on interaction with MYD88; dbSNP:rs138116867." evidence="23">
    <original>I</original>
    <variation>T</variation>
    <location>
        <position position="26"/>
    </location>
</feature>
<feature type="sequence variant" id="VAR_072891" description="No effect on inhibition of NF-kappa-B activation; no effect on interaction with MYD88; dbSNP:rs113588409." evidence="23">
    <original>I</original>
    <variation>V</variation>
    <location>
        <position position="39"/>
    </location>
</feature>
<feature type="sequence variant" id="VAR_019354" description="No effect on inhibition of NF-kappa-B activation; no effect on interaction with MYD88; dbSNP:rs4251469." evidence="23 26">
    <original>S</original>
    <variation>R</variation>
    <location>
        <position position="98"/>
    </location>
</feature>
<feature type="sequence variant" id="VAR_072892" description="In IMD67; decreases inhibition of NF-kappa-B complex activation; impairs neutrophil migration and phagocytosis; dbSNP:rs568782766." evidence="19 21 23">
    <original>G</original>
    <variation>D</variation>
    <location>
        <position position="298"/>
    </location>
</feature>
<feature type="sequence variant" id="VAR_040589" description="In dbSNP:rs142376871." evidence="16">
    <original>M</original>
    <variation>V</variation>
    <location>
        <position position="355"/>
    </location>
</feature>
<feature type="sequence variant" id="VAR_019355" description="In dbSNP:rs4251583." evidence="26">
    <original>H</original>
    <variation>R</variation>
    <location>
        <position position="390"/>
    </location>
</feature>
<feature type="sequence variant" id="VAR_040590" description="In dbSNP:rs55944915." evidence="16 17">
    <original>R</original>
    <variation>H</variation>
    <location>
        <position position="391"/>
    </location>
</feature>
<feature type="sequence variant" id="VAR_019356" description="In dbSNP:rs4251545." evidence="16 26">
    <original>A</original>
    <variation>T</variation>
    <location>
        <position position="428"/>
    </location>
</feature>
<feature type="mutagenesis site" description="Loss of kinase activity." evidence="8">
    <original>K</original>
    <variation>A</variation>
    <location>
        <position position="213"/>
    </location>
</feature>
<feature type="sequence conflict" description="In Ref. 1; AAM15772." evidence="29" ref="1">
    <original>V</original>
    <variation>A</variation>
    <location>
        <position position="81"/>
    </location>
</feature>
<feature type="sequence conflict" description="In Ref. 2; AAD42884." evidence="29" ref="2">
    <original>V</original>
    <variation>G</variation>
    <location>
        <position position="432"/>
    </location>
</feature>
<feature type="sequence conflict" description="In Ref. 2; AAD42884." evidence="29" ref="2">
    <original>L</original>
    <variation>R</variation>
    <location>
        <position position="437"/>
    </location>
</feature>
<feature type="sequence conflict" description="In Ref. 2; AAD42884." evidence="29" ref="2">
    <original>R</original>
    <variation>S</variation>
    <location>
        <position position="444"/>
    </location>
</feature>
<feature type="sequence conflict" description="In Ref. 2; AAD42884." evidence="29" ref="2">
    <original>Q</original>
    <variation>H</variation>
    <location>
        <position position="451"/>
    </location>
</feature>
<feature type="helix" evidence="32">
    <location>
        <begin position="11"/>
        <end position="13"/>
    </location>
</feature>
<feature type="helix" evidence="32">
    <location>
        <begin position="16"/>
        <end position="26"/>
    </location>
</feature>
<feature type="helix" evidence="32">
    <location>
        <begin position="31"/>
        <end position="38"/>
    </location>
</feature>
<feature type="strand" evidence="32">
    <location>
        <begin position="42"/>
        <end position="48"/>
    </location>
</feature>
<feature type="helix" evidence="32">
    <location>
        <begin position="50"/>
        <end position="57"/>
    </location>
</feature>
<feature type="helix" evidence="32">
    <location>
        <begin position="58"/>
        <end position="60"/>
    </location>
</feature>
<feature type="turn" evidence="32">
    <location>
        <begin position="61"/>
        <end position="63"/>
    </location>
</feature>
<feature type="helix" evidence="32">
    <location>
        <begin position="66"/>
        <end position="73"/>
    </location>
</feature>
<feature type="turn" evidence="32">
    <location>
        <begin position="74"/>
        <end position="77"/>
    </location>
</feature>
<feature type="helix" evidence="32">
    <location>
        <begin position="81"/>
        <end position="89"/>
    </location>
</feature>
<feature type="turn" evidence="32">
    <location>
        <begin position="90"/>
        <end position="92"/>
    </location>
</feature>
<feature type="helix" evidence="32">
    <location>
        <begin position="94"/>
        <end position="100"/>
    </location>
</feature>
<feature type="strand" evidence="32">
    <location>
        <begin position="102"/>
        <end position="104"/>
    </location>
</feature>
<feature type="strand" evidence="34">
    <location>
        <begin position="165"/>
        <end position="167"/>
    </location>
</feature>
<feature type="helix" evidence="34">
    <location>
        <begin position="170"/>
        <end position="176"/>
    </location>
</feature>
<feature type="turn" evidence="34">
    <location>
        <begin position="177"/>
        <end position="180"/>
    </location>
</feature>
<feature type="helix" evidence="34">
    <location>
        <begin position="185"/>
        <end position="187"/>
    </location>
</feature>
<feature type="strand" evidence="34">
    <location>
        <begin position="191"/>
        <end position="194"/>
    </location>
</feature>
<feature type="strand" evidence="34">
    <location>
        <begin position="196"/>
        <end position="205"/>
    </location>
</feature>
<feature type="strand" evidence="34">
    <location>
        <begin position="208"/>
        <end position="215"/>
    </location>
</feature>
<feature type="strand" evidence="36">
    <location>
        <begin position="218"/>
        <end position="220"/>
    </location>
</feature>
<feature type="helix" evidence="34">
    <location>
        <begin position="225"/>
        <end position="239"/>
    </location>
</feature>
<feature type="strand" evidence="34">
    <location>
        <begin position="248"/>
        <end position="252"/>
    </location>
</feature>
<feature type="strand" evidence="34">
    <location>
        <begin position="254"/>
        <end position="257"/>
    </location>
</feature>
<feature type="strand" evidence="34">
    <location>
        <begin position="259"/>
        <end position="263"/>
    </location>
</feature>
<feature type="helix" evidence="34">
    <location>
        <begin position="270"/>
        <end position="274"/>
    </location>
</feature>
<feature type="helix" evidence="34">
    <location>
        <begin position="277"/>
        <end position="279"/>
    </location>
</feature>
<feature type="helix" evidence="34">
    <location>
        <begin position="285"/>
        <end position="304"/>
    </location>
</feature>
<feature type="helix" evidence="34">
    <location>
        <begin position="314"/>
        <end position="316"/>
    </location>
</feature>
<feature type="strand" evidence="34">
    <location>
        <begin position="317"/>
        <end position="319"/>
    </location>
</feature>
<feature type="strand" evidence="34">
    <location>
        <begin position="325"/>
        <end position="327"/>
    </location>
</feature>
<feature type="strand" evidence="34">
    <location>
        <begin position="334"/>
        <end position="336"/>
    </location>
</feature>
<feature type="turn" evidence="37">
    <location>
        <begin position="337"/>
        <end position="340"/>
    </location>
</feature>
<feature type="strand" evidence="34">
    <location>
        <begin position="343"/>
        <end position="345"/>
    </location>
</feature>
<feature type="strand" evidence="33">
    <location>
        <begin position="349"/>
        <end position="351"/>
    </location>
</feature>
<feature type="helix" evidence="35">
    <location>
        <begin position="352"/>
        <end position="354"/>
    </location>
</feature>
<feature type="helix" evidence="34">
    <location>
        <begin position="357"/>
        <end position="360"/>
    </location>
</feature>
<feature type="helix" evidence="34">
    <location>
        <begin position="367"/>
        <end position="382"/>
    </location>
</feature>
<feature type="strand" evidence="34">
    <location>
        <begin position="391"/>
        <end position="395"/>
    </location>
</feature>
<feature type="helix" evidence="34">
    <location>
        <begin position="396"/>
        <end position="398"/>
    </location>
</feature>
<feature type="helix" evidence="34">
    <location>
        <begin position="399"/>
        <end position="404"/>
    </location>
</feature>
<feature type="helix" evidence="34">
    <location>
        <begin position="410"/>
        <end position="413"/>
    </location>
</feature>
<feature type="helix" evidence="34">
    <location>
        <begin position="423"/>
        <end position="436"/>
    </location>
</feature>
<feature type="helix" evidence="34">
    <location>
        <begin position="441"/>
        <end position="443"/>
    </location>
</feature>
<feature type="helix" evidence="34">
    <location>
        <begin position="447"/>
        <end position="456"/>
    </location>
</feature>
<gene>
    <name type="primary">IRAK4</name>
</gene>
<proteinExistence type="evidence at protein level"/>
<reference key="1">
    <citation type="journal article" date="2002" name="Proc. Natl. Acad. Sci. U.S.A.">
        <title>IRAK4: a novel member of the IRAK family with the properties of an IRAK-kinase.</title>
        <authorList>
            <person name="Li S."/>
            <person name="Strelow A."/>
            <person name="Fontana E.J."/>
            <person name="Wesche H."/>
        </authorList>
    </citation>
    <scope>NUCLEOTIDE SEQUENCE [MRNA] (ISOFORM 1)</scope>
    <scope>FUNCTION</scope>
    <scope>INTERACTION WITH IRAK1 AND TRAF6</scope>
</reference>
<reference key="2">
    <citation type="journal article" date="1999" name="Int. J. Cancer">
        <title>Antigens recognized by autologous antibody in patients with renal-cell carcinoma.</title>
        <authorList>
            <person name="Scanlan M.J."/>
            <person name="Gordan J.D."/>
            <person name="Williamson B."/>
            <person name="Stockert E."/>
            <person name="Bander N.H."/>
            <person name="Jongeneel C.V."/>
            <person name="Gure A.O."/>
            <person name="Jaeger D."/>
            <person name="Jaeger E."/>
            <person name="Knuth A."/>
            <person name="Chen Y.-T."/>
            <person name="Old L.J."/>
        </authorList>
    </citation>
    <scope>NUCLEOTIDE SEQUENCE [MRNA] (ISOFORM 1)</scope>
    <scope>IDENTIFICATION AS A RENAL CANCER ANTIGEN</scope>
</reference>
<reference key="3">
    <citation type="submission" date="2003-07" db="EMBL/GenBank/DDBJ databases">
        <title>Human interleukin-1 receptor associated kinase 4 cDNA sequences.</title>
        <authorList>
            <person name="Chuang T.H."/>
            <person name="Ulevitch R.J."/>
        </authorList>
    </citation>
    <scope>NUCLEOTIDE SEQUENCE [MRNA] (ISOFORM 2)</scope>
    <source>
        <tissue>Spleen</tissue>
    </source>
</reference>
<reference key="4">
    <citation type="journal article" date="2004" name="Nat. Genet.">
        <title>Complete sequencing and characterization of 21,243 full-length human cDNAs.</title>
        <authorList>
            <person name="Ota T."/>
            <person name="Suzuki Y."/>
            <person name="Nishikawa T."/>
            <person name="Otsuki T."/>
            <person name="Sugiyama T."/>
            <person name="Irie R."/>
            <person name="Wakamatsu A."/>
            <person name="Hayashi K."/>
            <person name="Sato H."/>
            <person name="Nagai K."/>
            <person name="Kimura K."/>
            <person name="Makita H."/>
            <person name="Sekine M."/>
            <person name="Obayashi M."/>
            <person name="Nishi T."/>
            <person name="Shibahara T."/>
            <person name="Tanaka T."/>
            <person name="Ishii S."/>
            <person name="Yamamoto J."/>
            <person name="Saito K."/>
            <person name="Kawai Y."/>
            <person name="Isono Y."/>
            <person name="Nakamura Y."/>
            <person name="Nagahari K."/>
            <person name="Murakami K."/>
            <person name="Yasuda T."/>
            <person name="Iwayanagi T."/>
            <person name="Wagatsuma M."/>
            <person name="Shiratori A."/>
            <person name="Sudo H."/>
            <person name="Hosoiri T."/>
            <person name="Kaku Y."/>
            <person name="Kodaira H."/>
            <person name="Kondo H."/>
            <person name="Sugawara M."/>
            <person name="Takahashi M."/>
            <person name="Kanda K."/>
            <person name="Yokoi T."/>
            <person name="Furuya T."/>
            <person name="Kikkawa E."/>
            <person name="Omura Y."/>
            <person name="Abe K."/>
            <person name="Kamihara K."/>
            <person name="Katsuta N."/>
            <person name="Sato K."/>
            <person name="Tanikawa M."/>
            <person name="Yamazaki M."/>
            <person name="Ninomiya K."/>
            <person name="Ishibashi T."/>
            <person name="Yamashita H."/>
            <person name="Murakawa K."/>
            <person name="Fujimori K."/>
            <person name="Tanai H."/>
            <person name="Kimata M."/>
            <person name="Watanabe M."/>
            <person name="Hiraoka S."/>
            <person name="Chiba Y."/>
            <person name="Ishida S."/>
            <person name="Ono Y."/>
            <person name="Takiguchi S."/>
            <person name="Watanabe S."/>
            <person name="Yosida M."/>
            <person name="Hotuta T."/>
            <person name="Kusano J."/>
            <person name="Kanehori K."/>
            <person name="Takahashi-Fujii A."/>
            <person name="Hara H."/>
            <person name="Tanase T.-O."/>
            <person name="Nomura Y."/>
            <person name="Togiya S."/>
            <person name="Komai F."/>
            <person name="Hara R."/>
            <person name="Takeuchi K."/>
            <person name="Arita M."/>
            <person name="Imose N."/>
            <person name="Musashino K."/>
            <person name="Yuuki H."/>
            <person name="Oshima A."/>
            <person name="Sasaki N."/>
            <person name="Aotsuka S."/>
            <person name="Yoshikawa Y."/>
            <person name="Matsunawa H."/>
            <person name="Ichihara T."/>
            <person name="Shiohata N."/>
            <person name="Sano S."/>
            <person name="Moriya S."/>
            <person name="Momiyama H."/>
            <person name="Satoh N."/>
            <person name="Takami S."/>
            <person name="Terashima Y."/>
            <person name="Suzuki O."/>
            <person name="Nakagawa S."/>
            <person name="Senoh A."/>
            <person name="Mizoguchi H."/>
            <person name="Goto Y."/>
            <person name="Shimizu F."/>
            <person name="Wakebe H."/>
            <person name="Hishigaki H."/>
            <person name="Watanabe T."/>
            <person name="Sugiyama A."/>
            <person name="Takemoto M."/>
            <person name="Kawakami B."/>
            <person name="Yamazaki M."/>
            <person name="Watanabe K."/>
            <person name="Kumagai A."/>
            <person name="Itakura S."/>
            <person name="Fukuzumi Y."/>
            <person name="Fujimori Y."/>
            <person name="Komiyama M."/>
            <person name="Tashiro H."/>
            <person name="Tanigami A."/>
            <person name="Fujiwara T."/>
            <person name="Ono T."/>
            <person name="Yamada K."/>
            <person name="Fujii Y."/>
            <person name="Ozaki K."/>
            <person name="Hirao M."/>
            <person name="Ohmori Y."/>
            <person name="Kawabata A."/>
            <person name="Hikiji T."/>
            <person name="Kobatake N."/>
            <person name="Inagaki H."/>
            <person name="Ikema Y."/>
            <person name="Okamoto S."/>
            <person name="Okitani R."/>
            <person name="Kawakami T."/>
            <person name="Noguchi S."/>
            <person name="Itoh T."/>
            <person name="Shigeta K."/>
            <person name="Senba T."/>
            <person name="Matsumura K."/>
            <person name="Nakajima Y."/>
            <person name="Mizuno T."/>
            <person name="Morinaga M."/>
            <person name="Sasaki M."/>
            <person name="Togashi T."/>
            <person name="Oyama M."/>
            <person name="Hata H."/>
            <person name="Watanabe M."/>
            <person name="Komatsu T."/>
            <person name="Mizushima-Sugano J."/>
            <person name="Satoh T."/>
            <person name="Shirai Y."/>
            <person name="Takahashi Y."/>
            <person name="Nakagawa K."/>
            <person name="Okumura K."/>
            <person name="Nagase T."/>
            <person name="Nomura N."/>
            <person name="Kikuchi H."/>
            <person name="Masuho Y."/>
            <person name="Yamashita R."/>
            <person name="Nakai K."/>
            <person name="Yada T."/>
            <person name="Nakamura Y."/>
            <person name="Ohara O."/>
            <person name="Isogai T."/>
            <person name="Sugano S."/>
        </authorList>
    </citation>
    <scope>NUCLEOTIDE SEQUENCE [LARGE SCALE MRNA] (ISOFORMS 1 AND 2)</scope>
</reference>
<reference key="5">
    <citation type="submission" date="2002-11" db="EMBL/GenBank/DDBJ databases">
        <authorList>
            <consortium name="SeattleSNPs variation discovery resource"/>
        </authorList>
    </citation>
    <scope>NUCLEOTIDE SEQUENCE [GENOMIC DNA]</scope>
    <scope>VARIANTS ARG-98; ARG-390 AND THR-428</scope>
</reference>
<reference key="6">
    <citation type="journal article" date="2006" name="Nature">
        <title>The finished DNA sequence of human chromosome 12.</title>
        <authorList>
            <person name="Scherer S.E."/>
            <person name="Muzny D.M."/>
            <person name="Buhay C.J."/>
            <person name="Chen R."/>
            <person name="Cree A."/>
            <person name="Ding Y."/>
            <person name="Dugan-Rocha S."/>
            <person name="Gill R."/>
            <person name="Gunaratne P."/>
            <person name="Harris R.A."/>
            <person name="Hawes A.C."/>
            <person name="Hernandez J."/>
            <person name="Hodgson A.V."/>
            <person name="Hume J."/>
            <person name="Jackson A."/>
            <person name="Khan Z.M."/>
            <person name="Kovar-Smith C."/>
            <person name="Lewis L.R."/>
            <person name="Lozado R.J."/>
            <person name="Metzker M.L."/>
            <person name="Milosavljevic A."/>
            <person name="Miner G.R."/>
            <person name="Montgomery K.T."/>
            <person name="Morgan M.B."/>
            <person name="Nazareth L.V."/>
            <person name="Scott G."/>
            <person name="Sodergren E."/>
            <person name="Song X.-Z."/>
            <person name="Steffen D."/>
            <person name="Lovering R.C."/>
            <person name="Wheeler D.A."/>
            <person name="Worley K.C."/>
            <person name="Yuan Y."/>
            <person name="Zhang Z."/>
            <person name="Adams C.Q."/>
            <person name="Ansari-Lari M.A."/>
            <person name="Ayele M."/>
            <person name="Brown M.J."/>
            <person name="Chen G."/>
            <person name="Chen Z."/>
            <person name="Clerc-Blankenburg K.P."/>
            <person name="Davis C."/>
            <person name="Delgado O."/>
            <person name="Dinh H.H."/>
            <person name="Draper H."/>
            <person name="Gonzalez-Garay M.L."/>
            <person name="Havlak P."/>
            <person name="Jackson L.R."/>
            <person name="Jacob L.S."/>
            <person name="Kelly S.H."/>
            <person name="Li L."/>
            <person name="Li Z."/>
            <person name="Liu J."/>
            <person name="Liu W."/>
            <person name="Lu J."/>
            <person name="Maheshwari M."/>
            <person name="Nguyen B.-V."/>
            <person name="Okwuonu G.O."/>
            <person name="Pasternak S."/>
            <person name="Perez L.M."/>
            <person name="Plopper F.J.H."/>
            <person name="Santibanez J."/>
            <person name="Shen H."/>
            <person name="Tabor P.E."/>
            <person name="Verduzco D."/>
            <person name="Waldron L."/>
            <person name="Wang Q."/>
            <person name="Williams G.A."/>
            <person name="Zhang J."/>
            <person name="Zhou J."/>
            <person name="Allen C.C."/>
            <person name="Amin A.G."/>
            <person name="Anyalebechi V."/>
            <person name="Bailey M."/>
            <person name="Barbaria J.A."/>
            <person name="Bimage K.E."/>
            <person name="Bryant N.P."/>
            <person name="Burch P.E."/>
            <person name="Burkett C.E."/>
            <person name="Burrell K.L."/>
            <person name="Calderon E."/>
            <person name="Cardenas V."/>
            <person name="Carter K."/>
            <person name="Casias K."/>
            <person name="Cavazos I."/>
            <person name="Cavazos S.R."/>
            <person name="Ceasar H."/>
            <person name="Chacko J."/>
            <person name="Chan S.N."/>
            <person name="Chavez D."/>
            <person name="Christopoulos C."/>
            <person name="Chu J."/>
            <person name="Cockrell R."/>
            <person name="Cox C.D."/>
            <person name="Dang M."/>
            <person name="Dathorne S.R."/>
            <person name="David R."/>
            <person name="Davis C.M."/>
            <person name="Davy-Carroll L."/>
            <person name="Deshazo D.R."/>
            <person name="Donlin J.E."/>
            <person name="D'Souza L."/>
            <person name="Eaves K.A."/>
            <person name="Egan A."/>
            <person name="Emery-Cohen A.J."/>
            <person name="Escotto M."/>
            <person name="Flagg N."/>
            <person name="Forbes L.D."/>
            <person name="Gabisi A.M."/>
            <person name="Garza M."/>
            <person name="Hamilton C."/>
            <person name="Henderson N."/>
            <person name="Hernandez O."/>
            <person name="Hines S."/>
            <person name="Hogues M.E."/>
            <person name="Huang M."/>
            <person name="Idlebird D.G."/>
            <person name="Johnson R."/>
            <person name="Jolivet A."/>
            <person name="Jones S."/>
            <person name="Kagan R."/>
            <person name="King L.M."/>
            <person name="Leal B."/>
            <person name="Lebow H."/>
            <person name="Lee S."/>
            <person name="LeVan J.M."/>
            <person name="Lewis L.C."/>
            <person name="London P."/>
            <person name="Lorensuhewa L.M."/>
            <person name="Loulseged H."/>
            <person name="Lovett D.A."/>
            <person name="Lucier A."/>
            <person name="Lucier R.L."/>
            <person name="Ma J."/>
            <person name="Madu R.C."/>
            <person name="Mapua P."/>
            <person name="Martindale A.D."/>
            <person name="Martinez E."/>
            <person name="Massey E."/>
            <person name="Mawhiney S."/>
            <person name="Meador M.G."/>
            <person name="Mendez S."/>
            <person name="Mercado C."/>
            <person name="Mercado I.C."/>
            <person name="Merritt C.E."/>
            <person name="Miner Z.L."/>
            <person name="Minja E."/>
            <person name="Mitchell T."/>
            <person name="Mohabbat F."/>
            <person name="Mohabbat K."/>
            <person name="Montgomery B."/>
            <person name="Moore N."/>
            <person name="Morris S."/>
            <person name="Munidasa M."/>
            <person name="Ngo R.N."/>
            <person name="Nguyen N.B."/>
            <person name="Nickerson E."/>
            <person name="Nwaokelemeh O.O."/>
            <person name="Nwokenkwo S."/>
            <person name="Obregon M."/>
            <person name="Oguh M."/>
            <person name="Oragunye N."/>
            <person name="Oviedo R.J."/>
            <person name="Parish B.J."/>
            <person name="Parker D.N."/>
            <person name="Parrish J."/>
            <person name="Parks K.L."/>
            <person name="Paul H.A."/>
            <person name="Payton B.A."/>
            <person name="Perez A."/>
            <person name="Perrin W."/>
            <person name="Pickens A."/>
            <person name="Primus E.L."/>
            <person name="Pu L.-L."/>
            <person name="Puazo M."/>
            <person name="Quiles M.M."/>
            <person name="Quiroz J.B."/>
            <person name="Rabata D."/>
            <person name="Reeves K."/>
            <person name="Ruiz S.J."/>
            <person name="Shao H."/>
            <person name="Sisson I."/>
            <person name="Sonaike T."/>
            <person name="Sorelle R.P."/>
            <person name="Sutton A.E."/>
            <person name="Svatek A.F."/>
            <person name="Svetz L.A."/>
            <person name="Tamerisa K.S."/>
            <person name="Taylor T.R."/>
            <person name="Teague B."/>
            <person name="Thomas N."/>
            <person name="Thorn R.D."/>
            <person name="Trejos Z.Y."/>
            <person name="Trevino B.K."/>
            <person name="Ukegbu O.N."/>
            <person name="Urban J.B."/>
            <person name="Vasquez L.I."/>
            <person name="Vera V.A."/>
            <person name="Villasana D.M."/>
            <person name="Wang L."/>
            <person name="Ward-Moore S."/>
            <person name="Warren J.T."/>
            <person name="Wei X."/>
            <person name="White F."/>
            <person name="Williamson A.L."/>
            <person name="Wleczyk R."/>
            <person name="Wooden H.S."/>
            <person name="Wooden S.H."/>
            <person name="Yen J."/>
            <person name="Yoon L."/>
            <person name="Yoon V."/>
            <person name="Zorrilla S.E."/>
            <person name="Nelson D."/>
            <person name="Kucherlapati R."/>
            <person name="Weinstock G."/>
            <person name="Gibbs R.A."/>
        </authorList>
    </citation>
    <scope>NUCLEOTIDE SEQUENCE [LARGE SCALE GENOMIC DNA]</scope>
</reference>
<reference key="7">
    <citation type="journal article" date="2004" name="Genome Res.">
        <title>The status, quality, and expansion of the NIH full-length cDNA project: the Mammalian Gene Collection (MGC).</title>
        <authorList>
            <consortium name="The MGC Project Team"/>
        </authorList>
    </citation>
    <scope>NUCLEOTIDE SEQUENCE [LARGE SCALE MRNA] (ISOFORM 1)</scope>
    <source>
        <tissue>Brain</tissue>
    </source>
</reference>
<reference key="8">
    <citation type="journal article" date="2003" name="J. Biol. Chem.">
        <title>Pellino 1 is required for interleukin-1 (IL-1)-mediated signaling through its interaction with the IL-1 receptor-associated kinase 4 (IRAK4)-IRAK-tumor necrosis factor receptor-associated factor 6 (TRAF6) complex.</title>
        <authorList>
            <person name="Jiang Z."/>
            <person name="Johnson H.J."/>
            <person name="Nie H."/>
            <person name="Qin J."/>
            <person name="Bird T.A."/>
            <person name="Li X."/>
        </authorList>
    </citation>
    <scope>INTERACTION WITH IRAK1; PELI1 AND TRAF6</scope>
</reference>
<reference key="9">
    <citation type="journal article" date="2003" name="J. Exp. Med.">
        <title>Inhibition of interleukin 1 receptor/Toll-like receptor signaling through the alternatively spliced, short form of MyD88 is due to its failure to recruit IRAK-4.</title>
        <authorList>
            <person name="Burns K."/>
            <person name="Janssens S."/>
            <person name="Brissoni B."/>
            <person name="Olivos N."/>
            <person name="Beyaert R."/>
            <person name="Tschopp J."/>
        </authorList>
    </citation>
    <scope>FUNCTION IN PHOSPHORYLATION OF IRAK1</scope>
</reference>
<reference key="10">
    <citation type="journal article" date="2003" name="J. Exp. Med.">
        <title>Distinct mutations in IRAK-4 confer hyporesponsiveness to lipopolysaccharide and interleukin-1 in a patient with recurrent bacterial infections.</title>
        <authorList>
            <person name="Medvedev A.E."/>
            <person name="Lentschat A."/>
            <person name="Kuhns D.B."/>
            <person name="Blanco J.C.G."/>
            <person name="Salkowski C."/>
            <person name="Zhang S."/>
            <person name="Arditi M."/>
            <person name="Gallin J.I."/>
            <person name="Vogel S.N."/>
        </authorList>
    </citation>
    <scope>INVOLVEMENT IN IMD67</scope>
</reference>
<reference key="11">
    <citation type="journal article" date="2004" name="J. Biol. Chem.">
        <title>IRAK4 kinase activity is redundant for interleukin-1 (IL-1) receptor-associated kinase phosphorylation and IL-1 responsiveness.</title>
        <authorList>
            <person name="Qin J."/>
            <person name="Jiang Z."/>
            <person name="Qian Y."/>
            <person name="Casanova J.-L."/>
            <person name="Li X."/>
        </authorList>
    </citation>
    <scope>FUNCTION</scope>
    <scope>MUTAGENESIS OF LYS-213</scope>
</reference>
<reference key="12">
    <citation type="journal article" date="2003" name="Science">
        <title>Pyogenic bacterial infections in humans with IRAK-4 deficiency.</title>
        <authorList>
            <person name="Picard C."/>
            <person name="Puel A."/>
            <person name="Bonnet M."/>
            <person name="Ku C.-L."/>
            <person name="Bustamante J."/>
            <person name="Yang K."/>
            <person name="Soudais C."/>
            <person name="Dupuis S."/>
            <person name="Feinberg J."/>
            <person name="Fieschi C."/>
            <person name="Elbim C."/>
            <person name="Hitchcock R."/>
            <person name="Lammas D."/>
            <person name="Davies G."/>
            <person name="Al-Ghonaium A."/>
            <person name="Al-Rayes H."/>
            <person name="Al-Jumaah S."/>
            <person name="Al-Hajjar S."/>
            <person name="Al-Mohsen I.Z."/>
            <person name="Frayha H.H."/>
            <person name="Rucker R."/>
            <person name="Hawn T.R."/>
            <person name="Aderem A."/>
            <person name="Tufenkeji H."/>
            <person name="Haraguchi S."/>
            <person name="Day N.K."/>
            <person name="Good R.A."/>
            <person name="Gougerot-Pocidalo M.-A."/>
            <person name="Ozinsky A."/>
            <person name="Casanova J.-L."/>
        </authorList>
    </citation>
    <scope>INVOLVEMENT IN IMD67</scope>
</reference>
<reference key="13">
    <citation type="journal article" date="2005" name="Immunity">
        <title>IL-33, an interleukin-1-like cytokine that signals via the IL-1 receptor-related protein ST 2 and induces T helper type 2-associated cytokines.</title>
        <authorList>
            <person name="Schmitz J."/>
            <person name="Owyang A."/>
            <person name="Oldham E."/>
            <person name="Song Y."/>
            <person name="Murphy E."/>
            <person name="McClanahan T.K."/>
            <person name="Zurawski G."/>
            <person name="Moshrefi M."/>
            <person name="Qin J."/>
            <person name="Li X."/>
            <person name="Gorman D.M."/>
            <person name="Bazan J.F."/>
            <person name="Kastelein R.A."/>
        </authorList>
    </citation>
    <scope>INTERACTION WITH IL1RL1</scope>
</reference>
<reference key="14">
    <citation type="journal article" date="2006" name="Nat. Immunol.">
        <title>Smad6 negatively regulates interleukin 1-receptor-Toll-like receptor signaling through direct interaction with the adapter Pellino-1.</title>
        <authorList>
            <person name="Choi K.C."/>
            <person name="Lee Y.S."/>
            <person name="Lim S."/>
            <person name="Choi H.K."/>
            <person name="Lee C.H."/>
            <person name="Lee E.K."/>
            <person name="Hong S."/>
            <person name="Kim I.H."/>
            <person name="Kim S.J."/>
            <person name="Park S.H."/>
        </authorList>
    </citation>
    <scope>IDENTIFICATION IN COMPLEX WITH IRAK1; MYD88; PELI1 AND TRAF6</scope>
</reference>
<reference key="15">
    <citation type="journal article" date="2007" name="Biochem. J.">
        <title>Cross-talk between IRAK-4 and the NADPH oxidase.</title>
        <authorList>
            <person name="Pacquelet S."/>
            <person name="Johnson J.L."/>
            <person name="Ellis B.A."/>
            <person name="Brzezinska A.A."/>
            <person name="Lane W.S."/>
            <person name="Munafo D.B."/>
            <person name="Catz S.D."/>
        </authorList>
    </citation>
    <scope>FUNCTION IN PHOSPHORYLATION OF NCF1</scope>
</reference>
<reference key="16">
    <citation type="journal article" date="2007" name="J. Biol. Chem.">
        <title>IRAK-4 kinase activity is required for interleukin-1 (IL-1) receptor- and toll-like receptor 7-mediated signaling and gene expression.</title>
        <authorList>
            <person name="Koziczak-Holbro M."/>
            <person name="Joyce C."/>
            <person name="Gluck A."/>
            <person name="Kinzel B."/>
            <person name="Muller M."/>
            <person name="Tschopp C."/>
            <person name="Mathison J.C."/>
            <person name="Davis C.N."/>
            <person name="Gram H."/>
        </authorList>
    </citation>
    <scope>FUNCTION IN TLR7 SIGNALING PATHWAY</scope>
</reference>
<reference key="17">
    <citation type="journal article" date="2007" name="J. Med. Genet.">
        <title>IRAK4 and NEMO mutations in otherwise healthy children with recurrent invasive pneumococcal disease.</title>
        <authorList>
            <person name="Ku C.-L."/>
            <person name="Picard C."/>
            <person name="Erdos M."/>
            <person name="Jeurissen A."/>
            <person name="Bustamante J."/>
            <person name="Puel A."/>
            <person name="von Bernuth H."/>
            <person name="Filipe-Santos O."/>
            <person name="Chang H.-H."/>
            <person name="Lawrence T."/>
            <person name="Raes M."/>
            <person name="Marodi L."/>
            <person name="Bossuyt X."/>
            <person name="Casanova J.-L."/>
        </authorList>
    </citation>
    <scope>INVOLVEMENT IN IMD67</scope>
</reference>
<reference key="18">
    <citation type="journal article" date="2008" name="Biochem. J.">
        <title>The IRAK-catalysed activation of the E3 ligase function of Pellino isoforms induces the Lys63-linked polyubiquitination of IRAK1.</title>
        <authorList>
            <person name="Ordureau A."/>
            <person name="Smith H."/>
            <person name="Windheim M."/>
            <person name="Peggie M."/>
            <person name="Carrick E."/>
            <person name="Morrice N."/>
            <person name="Cohen P."/>
        </authorList>
    </citation>
    <scope>FUNCTION IN PHOSPHORYLATION OF PELI1</scope>
</reference>
<reference key="19">
    <citation type="journal article" date="2008" name="Mol. Cell">
        <title>Kinase-selective enrichment enables quantitative phosphoproteomics of the kinome across the cell cycle.</title>
        <authorList>
            <person name="Daub H."/>
            <person name="Olsen J.V."/>
            <person name="Bairlein M."/>
            <person name="Gnad F."/>
            <person name="Oppermann F.S."/>
            <person name="Korner R."/>
            <person name="Greff Z."/>
            <person name="Keri G."/>
            <person name="Stemmann O."/>
            <person name="Mann M."/>
        </authorList>
    </citation>
    <scope>IDENTIFICATION BY MASS SPECTROMETRY [LARGE SCALE ANALYSIS]</scope>
    <source>
        <tissue>Cervix carcinoma</tissue>
    </source>
</reference>
<reference key="20">
    <citation type="journal article" date="2008" name="Proc. Natl. Acad. Sci. U.S.A.">
        <title>A quantitative atlas of mitotic phosphorylation.</title>
        <authorList>
            <person name="Dephoure N."/>
            <person name="Zhou C."/>
            <person name="Villen J."/>
            <person name="Beausoleil S.A."/>
            <person name="Bakalarski C.E."/>
            <person name="Elledge S.J."/>
            <person name="Gygi S.P."/>
        </authorList>
    </citation>
    <scope>IDENTIFICATION BY MASS SPECTROMETRY [LARGE SCALE ANALYSIS]</scope>
    <source>
        <tissue>Cervix carcinoma</tissue>
    </source>
</reference>
<reference key="21">
    <citation type="journal article" date="2009" name="Sci. Signal.">
        <title>Quantitative phosphoproteomic analysis of T cell receptor signaling reveals system-wide modulation of protein-protein interactions.</title>
        <authorList>
            <person name="Mayya V."/>
            <person name="Lundgren D.H."/>
            <person name="Hwang S.-I."/>
            <person name="Rezaul K."/>
            <person name="Wu L."/>
            <person name="Eng J.K."/>
            <person name="Rodionov V."/>
            <person name="Han D.K."/>
        </authorList>
    </citation>
    <scope>IDENTIFICATION BY MASS SPECTROMETRY [LARGE SCALE ANALYSIS]</scope>
    <source>
        <tissue>Leukemic T-cell</tissue>
    </source>
</reference>
<reference key="22">
    <citation type="journal article" date="2009" name="Science">
        <title>Lysine acetylation targets protein complexes and co-regulates major cellular functions.</title>
        <authorList>
            <person name="Choudhary C."/>
            <person name="Kumar C."/>
            <person name="Gnad F."/>
            <person name="Nielsen M.L."/>
            <person name="Rehman M."/>
            <person name="Walther T.C."/>
            <person name="Olsen J.V."/>
            <person name="Mann M."/>
        </authorList>
    </citation>
    <scope>ACETYLATION [LARGE SCALE ANALYSIS] AT LYS-34</scope>
    <scope>IDENTIFICATION BY MASS SPECTROMETRY [LARGE SCALE ANALYSIS]</scope>
</reference>
<reference key="23">
    <citation type="journal article" date="2010" name="J. Biol. Chem.">
        <title>IRAK1 and IRAK4 promote phosphorylation, ubiquitination, and degradation of MyD88 adaptor-like (Mal).</title>
        <authorList>
            <person name="Dunne A."/>
            <person name="Carpenter S."/>
            <person name="Brikos C."/>
            <person name="Gray P."/>
            <person name="Strelow A."/>
            <person name="Wesche H."/>
            <person name="Morrice N."/>
            <person name="O'Neill L.A."/>
        </authorList>
    </citation>
    <scope>FUNCTION IN PHOSPHORYLATION OF TIRAP</scope>
</reference>
<reference key="24">
    <citation type="journal article" date="2010" name="Sci. Signal.">
        <title>Quantitative phosphoproteomics reveals widespread full phosphorylation site occupancy during mitosis.</title>
        <authorList>
            <person name="Olsen J.V."/>
            <person name="Vermeulen M."/>
            <person name="Santamaria A."/>
            <person name="Kumar C."/>
            <person name="Miller M.L."/>
            <person name="Jensen L.J."/>
            <person name="Gnad F."/>
            <person name="Cox J."/>
            <person name="Jensen T.S."/>
            <person name="Nigg E.A."/>
            <person name="Brunak S."/>
            <person name="Mann M."/>
        </authorList>
    </citation>
    <scope>IDENTIFICATION BY MASS SPECTROMETRY [LARGE SCALE ANALYSIS]</scope>
    <source>
        <tissue>Cervix carcinoma</tissue>
    </source>
</reference>
<reference key="25">
    <citation type="journal article" date="2011" name="BMC Syst. Biol.">
        <title>Initial characterization of the human central proteome.</title>
        <authorList>
            <person name="Burkard T.R."/>
            <person name="Planyavsky M."/>
            <person name="Kaupe I."/>
            <person name="Breitwieser F.P."/>
            <person name="Buerckstuemmer T."/>
            <person name="Bennett K.L."/>
            <person name="Superti-Furga G."/>
            <person name="Colinge J."/>
        </authorList>
    </citation>
    <scope>IDENTIFICATION BY MASS SPECTROMETRY [LARGE SCALE ANALYSIS]</scope>
</reference>
<reference key="26">
    <citation type="journal article" date="2011" name="J. Biol. Chem.">
        <title>Natural loss-of-function mutation of myeloid differentiation protein 88 disrupts its ability to form Myddosomes.</title>
        <authorList>
            <person name="Nagpal K."/>
            <person name="Plantinga T.S."/>
            <person name="Sirois C.M."/>
            <person name="Monks B.G."/>
            <person name="Latz E."/>
            <person name="Netea M.G."/>
            <person name="Golenbock D.T."/>
        </authorList>
    </citation>
    <scope>SUBCELLULAR LOCATION</scope>
</reference>
<reference key="27">
    <citation type="journal article" date="2011" name="Trends Immunol.">
        <title>What the Myddosome structure tells us about the initiation of innate immunity.</title>
        <authorList>
            <person name="Gay N.J."/>
            <person name="Gangloff M."/>
            <person name="O'Neill L.A."/>
        </authorList>
    </citation>
    <scope>REVIEW ON MYDDOSOME</scope>
</reference>
<reference key="28">
    <citation type="journal article" date="2012" name="Proc. Natl. Acad. Sci. U.S.A.">
        <title>N-terminal acetylome analyses and functional insights of the N-terminal acetyltransferase NatB.</title>
        <authorList>
            <person name="Van Damme P."/>
            <person name="Lasa M."/>
            <person name="Polevoda B."/>
            <person name="Gazquez C."/>
            <person name="Elosegui-Artola A."/>
            <person name="Kim D.S."/>
            <person name="De Juan-Pardo E."/>
            <person name="Demeyer K."/>
            <person name="Hole K."/>
            <person name="Larrea E."/>
            <person name="Timmerman E."/>
            <person name="Prieto J."/>
            <person name="Arnesen T."/>
            <person name="Sherman F."/>
            <person name="Gevaert K."/>
            <person name="Aldabe R."/>
        </authorList>
    </citation>
    <scope>ACETYLATION [LARGE SCALE ANALYSIS] AT MET-1</scope>
    <scope>IDENTIFICATION BY MASS SPECTROMETRY [LARGE SCALE ANALYSIS]</scope>
</reference>
<reference key="29">
    <citation type="journal article" date="2013" name="J. Proteome Res.">
        <title>Toward a comprehensive characterization of a human cancer cell phosphoproteome.</title>
        <authorList>
            <person name="Zhou H."/>
            <person name="Di Palma S."/>
            <person name="Preisinger C."/>
            <person name="Peng M."/>
            <person name="Polat A.N."/>
            <person name="Heck A.J."/>
            <person name="Mohammed S."/>
        </authorList>
    </citation>
    <scope>IDENTIFICATION BY MASS SPECTROMETRY [LARGE SCALE ANALYSIS]</scope>
    <source>
        <tissue>Erythroleukemia</tissue>
    </source>
</reference>
<reference key="30">
    <citation type="journal article" date="2021" name="Structure">
        <title>Dimeric Structure of the Pseudokinase IRAK3 Suggests an Allosteric Mechanism for Negative Regulation.</title>
        <authorList>
            <person name="Lange S.M."/>
            <person name="Nelen M.I."/>
            <person name="Cohen P."/>
            <person name="Kulathu Y."/>
        </authorList>
    </citation>
    <scope>INTERACTION WITH IRAK1 AND IRAK3</scope>
</reference>
<reference key="31">
    <citation type="journal article" date="2006" name="Structure">
        <title>Crystal structures of IRAK-4 kinase in complex with inhibitors: a serine/threonine kinase with tyrosine as a gatekeeper.</title>
        <authorList>
            <person name="Wang Z."/>
            <person name="Liu J."/>
            <person name="Sudom A."/>
            <person name="Ayres M."/>
            <person name="Li S."/>
            <person name="Wesche H."/>
            <person name="Powers J.P."/>
            <person name="Walker N.P.C."/>
        </authorList>
    </citation>
    <scope>X-RAY CRYSTALLOGRAPHY (2.00 ANGSTROMS) OF 154-460 IN COMPLEX WITH INHIBITORS</scope>
    <scope>PHOSPHORYLATION AT THR-345 AND SER-346</scope>
</reference>
<reference key="32">
    <citation type="submission" date="2006-12" db="PDB data bank">
        <title>Crystal structures of the apo and inhibited IRAK4 kinase domain.</title>
        <authorList>
            <person name="Mol C.D."/>
            <person name="Arduini R.M."/>
            <person name="Baker D.P."/>
            <person name="Chien E.Y."/>
            <person name="Dougan D.R."/>
            <person name="Friedman J."/>
            <person name="Gibaja V."/>
            <person name="Hession C.A."/>
            <person name="Horne A."/>
        </authorList>
    </citation>
    <scope>X-RAY CRYSTALLOGRAPHY (2.40 ANGSTROMS) OF 163-460</scope>
    <scope>PHOSPHORYLATION AT THR-342 AND THR-345</scope>
</reference>
<reference key="33">
    <citation type="journal article" date="2007" name="J. Immunol.">
        <title>Cutting Edge: IL-1 receptor-associated kinase 4 structures reveal novel features and multiple conformations.</title>
        <authorList>
            <person name="Kuglstatter A."/>
            <person name="Villasenor A.G."/>
            <person name="Shaw D."/>
            <person name="Lee S.W."/>
            <person name="Tsing S."/>
            <person name="Niu L."/>
            <person name="Song K.W."/>
            <person name="Barnett J.W."/>
            <person name="Browner M.F."/>
        </authorList>
    </citation>
    <scope>X-RAY CRYSTALLOGRAPHY (2.00 ANGSTROMS) OF 160-460 IN COMPLEX WITH ATP ANALOGS</scope>
    <scope>PHOSPHORYLATION AT THR-342; THR-345 AND SER-346</scope>
    <scope>BIOPHYSICOCHEMICAL PROPERTIES</scope>
</reference>
<reference key="34">
    <citation type="journal article" date="2010" name="Nature">
        <title>Helical assembly in the MyD88-IRAK4-IRAK2 complex in TLR/IL-1R signalling.</title>
        <authorList>
            <person name="Lin S.-C."/>
            <person name="Lo Y.-C."/>
            <person name="Wu H."/>
        </authorList>
    </citation>
    <scope>X-RAY CRYSTALLOGRAPHY (3.40 ANGSTROMS) OF 4-106</scope>
</reference>
<reference key="35">
    <citation type="journal article" date="2007" name="J. Immunol.">
        <title>TLR9 activation induces normal neutrophil responses in a child with IRAK-4 deficiency: involvement of the direct PI3K pathway.</title>
        <authorList>
            <person name="Hoarau C."/>
            <person name="Gerard B."/>
            <person name="Lescanne E."/>
            <person name="Henry D."/>
            <person name="Francois S."/>
            <person name="Lacapere J.J."/>
            <person name="El Benna J."/>
            <person name="Dang P.M."/>
            <person name="Grandchamp B."/>
            <person name="Lebranchu Y."/>
            <person name="Gougerot-Pocidalo M.A."/>
            <person name="Elbim C."/>
        </authorList>
    </citation>
    <scope>VARIANT IMD67 CYS-12</scope>
    <scope>CHARACTERIZATION OF VARIANT IMD67 CYS-12</scope>
    <scope>VARIANT HIS-391</scope>
    <scope>FUNCTION</scope>
</reference>
<reference key="36">
    <citation type="journal article" date="2007" name="Nature">
        <title>Patterns of somatic mutation in human cancer genomes.</title>
        <authorList>
            <person name="Greenman C."/>
            <person name="Stephens P."/>
            <person name="Smith R."/>
            <person name="Dalgliesh G.L."/>
            <person name="Hunter C."/>
            <person name="Bignell G."/>
            <person name="Davies H."/>
            <person name="Teague J."/>
            <person name="Butler A."/>
            <person name="Stevens C."/>
            <person name="Edkins S."/>
            <person name="O'Meara S."/>
            <person name="Vastrik I."/>
            <person name="Schmidt E.E."/>
            <person name="Avis T."/>
            <person name="Barthorpe S."/>
            <person name="Bhamra G."/>
            <person name="Buck G."/>
            <person name="Choudhury B."/>
            <person name="Clements J."/>
            <person name="Cole J."/>
            <person name="Dicks E."/>
            <person name="Forbes S."/>
            <person name="Gray K."/>
            <person name="Halliday K."/>
            <person name="Harrison R."/>
            <person name="Hills K."/>
            <person name="Hinton J."/>
            <person name="Jenkinson A."/>
            <person name="Jones D."/>
            <person name="Menzies A."/>
            <person name="Mironenko T."/>
            <person name="Perry J."/>
            <person name="Raine K."/>
            <person name="Richardson D."/>
            <person name="Shepherd R."/>
            <person name="Small A."/>
            <person name="Tofts C."/>
            <person name="Varian J."/>
            <person name="Webb T."/>
            <person name="West S."/>
            <person name="Widaa S."/>
            <person name="Yates A."/>
            <person name="Cahill D.P."/>
            <person name="Louis D.N."/>
            <person name="Goldstraw P."/>
            <person name="Nicholson A.G."/>
            <person name="Brasseur F."/>
            <person name="Looijenga L."/>
            <person name="Weber B.L."/>
            <person name="Chiew Y.-E."/>
            <person name="DeFazio A."/>
            <person name="Greaves M.F."/>
            <person name="Green A.R."/>
            <person name="Campbell P."/>
            <person name="Birney E."/>
            <person name="Easton D.F."/>
            <person name="Chenevix-Trench G."/>
            <person name="Tan M.-H."/>
            <person name="Khoo S.K."/>
            <person name="Teh B.T."/>
            <person name="Yuen S.T."/>
            <person name="Leung S.Y."/>
            <person name="Wooster R."/>
            <person name="Futreal P.A."/>
            <person name="Stratton M.R."/>
        </authorList>
    </citation>
    <scope>VARIANTS [LARGE SCALE ANALYSIS] VAL-5; VAL-355; HIS-391 AND THR-428</scope>
</reference>
<reference key="37">
    <citation type="journal article" date="2009" name="Br. J. Haematol.">
        <title>Impaired neutrophil migration and phagocytosis in IRAK-4 deficiency.</title>
        <authorList>
            <person name="Bouma G."/>
            <person name="Doffinger R."/>
            <person name="Patel S.Y."/>
            <person name="Peskett E."/>
            <person name="Sinclair J.C."/>
            <person name="Barcenas-Morales G."/>
            <person name="Cerron-Gutierrez L."/>
            <person name="Kumararatne D.S."/>
            <person name="Davies E.G."/>
            <person name="Thrasher A.J."/>
            <person name="Burns S.O."/>
        </authorList>
    </citation>
    <scope>VARIANT IMD67 ASP-298</scope>
    <scope>CHARACTERIZATION OF VARIANT IMD67 ASP-298</scope>
</reference>
<reference key="38">
    <citation type="journal article" date="2010" name="Medicine (Baltimore)">
        <title>Clinical features and outcome of patients with IRAK-4 and MyD88 deficiency.</title>
        <authorList>
            <person name="Picard C."/>
            <person name="von Bernuth H."/>
            <person name="Ghandil P."/>
            <person name="Chrabieh M."/>
            <person name="Levy O."/>
            <person name="Arkwright P.D."/>
            <person name="McDonald D."/>
            <person name="Geha R.S."/>
            <person name="Takada H."/>
            <person name="Krause J.C."/>
            <person name="Creech C.B."/>
            <person name="Ku C.L."/>
            <person name="Ehl S."/>
            <person name="Marodi L."/>
            <person name="Al-Muhsen S."/>
            <person name="Al-Hajjar S."/>
            <person name="Al-Ghonaium A."/>
            <person name="Day-Good N.K."/>
            <person name="Holland S.M."/>
            <person name="Gallin J.I."/>
            <person name="Chapel H."/>
            <person name="Speert D.P."/>
            <person name="Rodriguez-Gallego C."/>
            <person name="Colino E."/>
            <person name="Garty B.Z."/>
            <person name="Roifman C."/>
            <person name="Hara T."/>
            <person name="Yoshikawa H."/>
            <person name="Nonoyama S."/>
            <person name="Domachowske J."/>
            <person name="Issekutz A.C."/>
            <person name="Tang M."/>
            <person name="Smart J."/>
            <person name="Zitnik S.E."/>
            <person name="Hoarau C."/>
            <person name="Kumararatne D.S."/>
            <person name="Thrasher A.J."/>
            <person name="Davies E.G."/>
            <person name="Bethune C."/>
            <person name="Sirvent N."/>
            <person name="de Ricaud D."/>
            <person name="Camcioglu Y."/>
            <person name="Vasconcelos J."/>
            <person name="Guedes M."/>
            <person name="Vitor A.B."/>
            <person name="Rodrigo C."/>
            <person name="Almazan F."/>
            <person name="Mendez M."/>
            <person name="Arostegui J.I."/>
            <person name="Alsina L."/>
            <person name="Fortuny C."/>
            <person name="Reichenbach J."/>
            <person name="Verbsky J.W."/>
            <person name="Bossuyt X."/>
            <person name="Doffinger R."/>
            <person name="Abel L."/>
            <person name="Puel A."/>
            <person name="Casanova J.L."/>
        </authorList>
    </citation>
    <scope>INVOLVEMENT IN IMD67</scope>
    <scope>VARIANT IMD67 ASP-298</scope>
</reference>
<reference key="39">
    <citation type="journal article" date="2014" name="Mol. Immunol.">
        <title>Functional assessment of the mutational effects of human IRAK4 and MyD88 genes.</title>
        <authorList>
            <person name="Yamamoto T."/>
            <person name="Tsutsumi N."/>
            <person name="Tochio H."/>
            <person name="Ohnishi H."/>
            <person name="Kubota K."/>
            <person name="Kato Z."/>
            <person name="Shirakawa M."/>
            <person name="Kondo N."/>
        </authorList>
    </citation>
    <scope>CHARACTERIZATION OF VARIANTS VAL-5; TRP-20; THR-26; VAL-39 AND ARG-98</scope>
    <scope>CHARACTERIZATION OF VARIANTS IMD67 CYS-12 AND ASP-298</scope>
    <scope>FUNCTION</scope>
    <scope>INTERACTION WITH MYD88</scope>
</reference>
<evidence type="ECO:0000250" key="1"/>
<evidence type="ECO:0000255" key="2">
    <source>
        <dbReference type="PROSITE-ProRule" id="PRU00159"/>
    </source>
</evidence>
<evidence type="ECO:0000269" key="3">
    <source>
    </source>
</evidence>
<evidence type="ECO:0000269" key="4">
    <source>
    </source>
</evidence>
<evidence type="ECO:0000269" key="5">
    <source>
    </source>
</evidence>
<evidence type="ECO:0000269" key="6">
    <source>
    </source>
</evidence>
<evidence type="ECO:0000269" key="7">
    <source>
    </source>
</evidence>
<evidence type="ECO:0000269" key="8">
    <source>
    </source>
</evidence>
<evidence type="ECO:0000269" key="9">
    <source>
    </source>
</evidence>
<evidence type="ECO:0000269" key="10">
    <source>
    </source>
</evidence>
<evidence type="ECO:0000269" key="11">
    <source>
    </source>
</evidence>
<evidence type="ECO:0000269" key="12">
    <source>
    </source>
</evidence>
<evidence type="ECO:0000269" key="13">
    <source>
    </source>
</evidence>
<evidence type="ECO:0000269" key="14">
    <source>
    </source>
</evidence>
<evidence type="ECO:0000269" key="15">
    <source>
    </source>
</evidence>
<evidence type="ECO:0000269" key="16">
    <source>
    </source>
</evidence>
<evidence type="ECO:0000269" key="17">
    <source>
    </source>
</evidence>
<evidence type="ECO:0000269" key="18">
    <source>
    </source>
</evidence>
<evidence type="ECO:0000269" key="19">
    <source>
    </source>
</evidence>
<evidence type="ECO:0000269" key="20">
    <source>
    </source>
</evidence>
<evidence type="ECO:0000269" key="21">
    <source>
    </source>
</evidence>
<evidence type="ECO:0000269" key="22">
    <source>
    </source>
</evidence>
<evidence type="ECO:0000269" key="23">
    <source>
    </source>
</evidence>
<evidence type="ECO:0000269" key="24">
    <source>
    </source>
</evidence>
<evidence type="ECO:0000269" key="25">
    <source ref="32"/>
</evidence>
<evidence type="ECO:0000269" key="26">
    <source ref="5"/>
</evidence>
<evidence type="ECO:0000303" key="27">
    <source>
    </source>
</evidence>
<evidence type="ECO:0000303" key="28">
    <source ref="3"/>
</evidence>
<evidence type="ECO:0000305" key="29"/>
<evidence type="ECO:0007744" key="30">
    <source>
    </source>
</evidence>
<evidence type="ECO:0007744" key="31">
    <source>
    </source>
</evidence>
<evidence type="ECO:0007829" key="32">
    <source>
        <dbReference type="PDB" id="3MOP"/>
    </source>
</evidence>
<evidence type="ECO:0007829" key="33">
    <source>
        <dbReference type="PDB" id="4U97"/>
    </source>
</evidence>
<evidence type="ECO:0007829" key="34">
    <source>
        <dbReference type="PDB" id="6EGE"/>
    </source>
</evidence>
<evidence type="ECO:0007829" key="35">
    <source>
        <dbReference type="PDB" id="6UYA"/>
    </source>
</evidence>
<evidence type="ECO:0007829" key="36">
    <source>
        <dbReference type="PDB" id="8UCC"/>
    </source>
</evidence>
<evidence type="ECO:0007829" key="37">
    <source>
        <dbReference type="PDB" id="8V2F"/>
    </source>
</evidence>
<comment type="function">
    <text evidence="3 5 8 13 15 17 18 20 23">Serine/threonine-protein kinase that plays a critical role in initiating innate immune response against foreign pathogens. Involved in Toll-like receptor (TLR) and IL-1R signaling pathways (PubMed:17878374). Is rapidly recruited by MYD88 to the receptor-signaling complex upon TLR activation to form the Myddosome together with IRAK2. Phosphorylates initially IRAK1, thus stimulating the kinase activity and intensive autophosphorylation of IRAK1. Phosphorylates E3 ubiquitin ligases Pellino proteins (PELI1, PELI2 and PELI3) to promote pellino-mediated polyubiquitination of IRAK1. Then, the ubiquitin-binding domain of IKBKG/NEMO binds to polyubiquitinated IRAK1 bringing together the IRAK1-MAP3K7/TAK1-TRAF6 complex and the NEMO-IKKA-IKKB complex. In turn, MAP3K7/TAK1 activates IKKs (CHUK/IKKA and IKBKB/IKKB) leading to NF-kappa-B nuclear translocation and activation. Alternatively, phosphorylates TIRAP to promote its ubiquitination and subsequent degradation. Phosphorylates NCF1 and regulates NADPH oxidase activation after LPS stimulation suggesting a similar mechanism during microbial infections.</text>
</comment>
<comment type="catalytic activity">
    <reaction>
        <text>L-seryl-[protein] + ATP = O-phospho-L-seryl-[protein] + ADP + H(+)</text>
        <dbReference type="Rhea" id="RHEA:17989"/>
        <dbReference type="Rhea" id="RHEA-COMP:9863"/>
        <dbReference type="Rhea" id="RHEA-COMP:11604"/>
        <dbReference type="ChEBI" id="CHEBI:15378"/>
        <dbReference type="ChEBI" id="CHEBI:29999"/>
        <dbReference type="ChEBI" id="CHEBI:30616"/>
        <dbReference type="ChEBI" id="CHEBI:83421"/>
        <dbReference type="ChEBI" id="CHEBI:456216"/>
        <dbReference type="EC" id="2.7.11.1"/>
    </reaction>
</comment>
<comment type="catalytic activity">
    <reaction>
        <text>L-threonyl-[protein] + ATP = O-phospho-L-threonyl-[protein] + ADP + H(+)</text>
        <dbReference type="Rhea" id="RHEA:46608"/>
        <dbReference type="Rhea" id="RHEA-COMP:11060"/>
        <dbReference type="Rhea" id="RHEA-COMP:11605"/>
        <dbReference type="ChEBI" id="CHEBI:15378"/>
        <dbReference type="ChEBI" id="CHEBI:30013"/>
        <dbReference type="ChEBI" id="CHEBI:30616"/>
        <dbReference type="ChEBI" id="CHEBI:61977"/>
        <dbReference type="ChEBI" id="CHEBI:456216"/>
        <dbReference type="EC" id="2.7.11.1"/>
    </reaction>
</comment>
<comment type="cofactor">
    <cofactor>
        <name>Mg(2+)</name>
        <dbReference type="ChEBI" id="CHEBI:18420"/>
    </cofactor>
</comment>
<comment type="biophysicochemical properties">
    <kinetics>
        <KM evidence="14">650 uM for ATP (at pH 7.5)</KM>
        <KM evidence="14">1100 uM for substrate (at pH 7.5)</KM>
    </kinetics>
</comment>
<comment type="subunit">
    <text evidence="3 4 9 11 23 24">Associates with MYD88 and IRAK2 to form a ternary complex called the Myddosome (PubMed:16951688, PubMed:24316379). Once phosphorylated, IRAK4 dissociates from the receptor complex and then associates with the TNF receptor-associated factor 6 (TRAF6), IRAK1, and PELI1; this intermediate complex is required for subsequent NF-kappa-B activation (PubMed:11960013, PubMed:12496252, PubMed:16951688). Direct binding of SMAD6 to PELI1 prevents complex formation and hence negatively regulates IL1R-TLR signaling and eventually NF-kappa-B-mediated gene expression (PubMed:16951688). Interacts with IL1RL1 (PubMed:16286016). Interacts (when phosphorylated) with IRAK1 (PubMed:33238146). May interact (when phosphorylated) with IRAK3 (PubMed:33238146).</text>
</comment>
<comment type="interaction">
    <interactant intactId="EBI-448378">
        <id>Q9NWZ3</id>
    </interactant>
    <interactant intactId="EBI-465156">
        <id>Q9UBH0</id>
        <label>IL36RN</label>
    </interactant>
    <organismsDiffer>false</organismsDiffer>
    <experiments>3</experiments>
</comment>
<comment type="interaction">
    <interactant intactId="EBI-448378">
        <id>Q9NWZ3</id>
    </interactant>
    <interactant intactId="EBI-447733">
        <id>O43187</id>
        <label>IRAK2</label>
    </interactant>
    <organismsDiffer>false</organismsDiffer>
    <experiments>6</experiments>
</comment>
<comment type="interaction">
    <interactant intactId="EBI-448378">
        <id>Q9NWZ3</id>
    </interactant>
    <interactant intactId="EBI-447677">
        <id>Q99836</id>
        <label>MYD88</label>
    </interactant>
    <organismsDiffer>false</organismsDiffer>
    <experiments>15</experiments>
</comment>
<comment type="interaction">
    <interactant intactId="EBI-448378">
        <id>Q9NWZ3</id>
    </interactant>
    <interactant intactId="EBI-15855480">
        <id>Q99836-1</id>
        <label>MYD88</label>
    </interactant>
    <organismsDiffer>false</organismsDiffer>
    <experiments>9</experiments>
</comment>
<comment type="interaction">
    <interactant intactId="EBI-448378">
        <id>Q9NWZ3</id>
    </interactant>
    <interactant intactId="EBI-448369">
        <id>Q96FA3</id>
        <label>PELI1</label>
    </interactant>
    <organismsDiffer>false</organismsDiffer>
    <experiments>6</experiments>
</comment>
<comment type="interaction">
    <interactant intactId="EBI-448378">
        <id>Q9NWZ3</id>
    </interactant>
    <interactant intactId="EBI-448407">
        <id>Q9HAT8</id>
        <label>PELI2</label>
    </interactant>
    <organismsDiffer>false</organismsDiffer>
    <experiments>3</experiments>
</comment>
<comment type="interaction">
    <interactant intactId="EBI-448378">
        <id>Q9NWZ3</id>
    </interactant>
    <interactant intactId="EBI-528644">
        <id>P58753</id>
        <label>TIRAP</label>
    </interactant>
    <organismsDiffer>false</organismsDiffer>
    <experiments>2</experiments>
</comment>
<comment type="interaction">
    <interactant intactId="EBI-448378">
        <id>Q9NWZ3</id>
    </interactant>
    <interactant intactId="EBI-2813981">
        <id>Q9C029</id>
        <label>TRIM7</label>
    </interactant>
    <organismsDiffer>false</organismsDiffer>
    <experiments>3</experiments>
</comment>
<comment type="interaction">
    <interactant intactId="EBI-448378">
        <id>Q9NWZ3</id>
    </interactant>
    <interactant intactId="EBI-2511675">
        <id>P0DPA2</id>
        <label>VSIG8</label>
    </interactant>
    <organismsDiffer>false</organismsDiffer>
    <experiments>2</experiments>
</comment>
<comment type="interaction">
    <interactant intactId="EBI-448378">
        <id>Q9NWZ3</id>
    </interactant>
    <interactant intactId="EBI-9091553">
        <id>Q96LX8</id>
        <label>ZNF597</label>
    </interactant>
    <organismsDiffer>false</organismsDiffer>
    <experiments>3</experiments>
</comment>
<comment type="interaction">
    <interactant intactId="EBI-448378">
        <id>Q9NWZ3</id>
    </interactant>
    <interactant intactId="EBI-646179">
        <id>Q8K4B2</id>
        <label>Irak3</label>
    </interactant>
    <organismsDiffer>true</organismsDiffer>
    <experiments>4</experiments>
</comment>
<comment type="subcellular location">
    <subcellularLocation>
        <location evidence="22">Cytoplasm</location>
    </subcellularLocation>
</comment>
<comment type="alternative products">
    <event type="alternative splicing"/>
    <isoform>
        <id>Q9NWZ3-1</id>
        <name>1</name>
        <sequence type="displayed"/>
    </isoform>
    <isoform>
        <id>Q9NWZ3-2</id>
        <name>2</name>
        <sequence type="described" ref="VSP_041556"/>
    </isoform>
</comment>
<comment type="PTM">
    <text evidence="1">Phosphorylated.</text>
</comment>
<comment type="disease" evidence="6 7 10 17 19 21 23">
    <disease id="DI-01831">
        <name>Immunodeficiency 67</name>
        <acronym>IMD67</acronym>
        <description>An autosomal recessive primary immunodeficiency characterized by recurrent, life-threatening systemic and invasive bacterial infections beginning in infancy or early childhood.</description>
        <dbReference type="MIM" id="607676"/>
    </disease>
    <text>The disease is caused by variants affecting the gene represented in this entry.</text>
</comment>
<comment type="similarity">
    <text evidence="29">Belongs to the protein kinase superfamily. TKL Ser/Thr protein kinase family. Pelle subfamily.</text>
</comment>
<comment type="online information" name="IRAK4base">
    <link uri="https://databases.lovd.nl/shared/genes/IRAK4"/>
    <text>IRAK4 mutation db</text>
</comment>
<accession>Q9NWZ3</accession>
<accession>Q69FE1</accession>
<accession>Q8TDF7</accession>
<accession>Q9Y589</accession>
<name>IRAK4_HUMAN</name>
<protein>
    <recommendedName>
        <fullName>Interleukin-1 receptor-associated kinase 4</fullName>
        <shortName>IRAK-4</shortName>
        <ecNumber>2.7.11.1</ecNumber>
    </recommendedName>
    <alternativeName>
        <fullName>Renal carcinoma antigen NY-REN-64</fullName>
    </alternativeName>
</protein>
<dbReference type="EC" id="2.7.11.1"/>
<dbReference type="EMBL" id="AF445802">
    <property type="protein sequence ID" value="AAM15772.1"/>
    <property type="molecule type" value="mRNA"/>
</dbReference>
<dbReference type="EMBL" id="AF155118">
    <property type="protein sequence ID" value="AAD42884.1"/>
    <property type="molecule type" value="mRNA"/>
</dbReference>
<dbReference type="EMBL" id="AY340964">
    <property type="protein sequence ID" value="AAR02360.1"/>
    <property type="molecule type" value="mRNA"/>
</dbReference>
<dbReference type="EMBL" id="AY340965">
    <property type="protein sequence ID" value="AAR02361.1"/>
    <property type="molecule type" value="mRNA"/>
</dbReference>
<dbReference type="EMBL" id="AY340966">
    <property type="protein sequence ID" value="AAR02362.1"/>
    <property type="molecule type" value="mRNA"/>
</dbReference>
<dbReference type="EMBL" id="AY340967">
    <property type="protein sequence ID" value="AAR02363.1"/>
    <property type="molecule type" value="mRNA"/>
</dbReference>
<dbReference type="EMBL" id="AK000528">
    <property type="protein sequence ID" value="BAA91232.1"/>
    <property type="molecule type" value="mRNA"/>
</dbReference>
<dbReference type="EMBL" id="AK299944">
    <property type="protein sequence ID" value="BAG61774.1"/>
    <property type="molecule type" value="mRNA"/>
</dbReference>
<dbReference type="EMBL" id="AY186092">
    <property type="protein sequence ID" value="AAN75440.1"/>
    <property type="molecule type" value="Genomic_DNA"/>
</dbReference>
<dbReference type="EMBL" id="AC093012">
    <property type="status" value="NOT_ANNOTATED_CDS"/>
    <property type="molecule type" value="Genomic_DNA"/>
</dbReference>
<dbReference type="EMBL" id="BC013316">
    <property type="protein sequence ID" value="AAH13316.1"/>
    <property type="molecule type" value="mRNA"/>
</dbReference>
<dbReference type="CCDS" id="CCDS44862.1">
    <molecule id="Q9NWZ3-2"/>
</dbReference>
<dbReference type="CCDS" id="CCDS8744.1">
    <molecule id="Q9NWZ3-1"/>
</dbReference>
<dbReference type="RefSeq" id="NP_001107654.1">
    <molecule id="Q9NWZ3-1"/>
    <property type="nucleotide sequence ID" value="NM_001114182.3"/>
</dbReference>
<dbReference type="RefSeq" id="NP_001138728.1">
    <molecule id="Q9NWZ3-2"/>
    <property type="nucleotide sequence ID" value="NM_001145256.2"/>
</dbReference>
<dbReference type="RefSeq" id="NP_001138729.1">
    <molecule id="Q9NWZ3-2"/>
    <property type="nucleotide sequence ID" value="NM_001145257.2"/>
</dbReference>
<dbReference type="RefSeq" id="NP_001138730.1">
    <molecule id="Q9NWZ3-2"/>
    <property type="nucleotide sequence ID" value="NM_001145258.2"/>
</dbReference>
<dbReference type="RefSeq" id="NP_001338267.1">
    <molecule id="Q9NWZ3-2"/>
    <property type="nucleotide sequence ID" value="NM_001351338.2"/>
</dbReference>
<dbReference type="RefSeq" id="NP_001338268.1">
    <molecule id="Q9NWZ3-2"/>
    <property type="nucleotide sequence ID" value="NM_001351339.2"/>
</dbReference>
<dbReference type="RefSeq" id="NP_001338269.1">
    <molecule id="Q9NWZ3-2"/>
    <property type="nucleotide sequence ID" value="NM_001351340.2"/>
</dbReference>
<dbReference type="RefSeq" id="NP_001338270.1">
    <molecule id="Q9NWZ3-2"/>
    <property type="nucleotide sequence ID" value="NM_001351341.2"/>
</dbReference>
<dbReference type="RefSeq" id="NP_001338271.1">
    <molecule id="Q9NWZ3-2"/>
    <property type="nucleotide sequence ID" value="NM_001351342.2"/>
</dbReference>
<dbReference type="RefSeq" id="NP_001338274.1">
    <molecule id="Q9NWZ3-1"/>
    <property type="nucleotide sequence ID" value="NM_001351345.2"/>
</dbReference>
<dbReference type="RefSeq" id="NP_057207.2">
    <molecule id="Q9NWZ3-1"/>
    <property type="nucleotide sequence ID" value="NM_016123.4"/>
</dbReference>
<dbReference type="RefSeq" id="XP_005269000.1">
    <molecule id="Q9NWZ3-1"/>
    <property type="nucleotide sequence ID" value="XM_005268943.4"/>
</dbReference>
<dbReference type="RefSeq" id="XP_005269001.1">
    <molecule id="Q9NWZ3-1"/>
    <property type="nucleotide sequence ID" value="XM_005268944.5"/>
</dbReference>
<dbReference type="RefSeq" id="XP_005269002.1">
    <molecule id="Q9NWZ3-1"/>
    <property type="nucleotide sequence ID" value="XM_005268945.5"/>
</dbReference>
<dbReference type="RefSeq" id="XP_005269004.1">
    <property type="nucleotide sequence ID" value="XM_005268947.4"/>
</dbReference>
<dbReference type="RefSeq" id="XP_005269005.1">
    <property type="nucleotide sequence ID" value="XM_005268948.2"/>
</dbReference>
<dbReference type="RefSeq" id="XP_005269006.1">
    <property type="nucleotide sequence ID" value="XM_005268949.2"/>
</dbReference>
<dbReference type="RefSeq" id="XP_006719501.1">
    <molecule id="Q9NWZ3-1"/>
    <property type="nucleotide sequence ID" value="XM_006719438.4"/>
</dbReference>
<dbReference type="RefSeq" id="XP_006719502.1">
    <property type="nucleotide sequence ID" value="XM_006719439.2"/>
</dbReference>
<dbReference type="RefSeq" id="XP_011536733.1">
    <molecule id="Q9NWZ3-1"/>
    <property type="nucleotide sequence ID" value="XM_011538431.3"/>
</dbReference>
<dbReference type="RefSeq" id="XP_011536734.1">
    <property type="nucleotide sequence ID" value="XM_011538432.1"/>
</dbReference>
<dbReference type="RefSeq" id="XP_011536735.1">
    <property type="nucleotide sequence ID" value="XM_011538433.2"/>
</dbReference>
<dbReference type="RefSeq" id="XP_016874879.1">
    <molecule id="Q9NWZ3-1"/>
    <property type="nucleotide sequence ID" value="XM_017019390.3"/>
</dbReference>
<dbReference type="RefSeq" id="XP_016874880.1">
    <property type="nucleotide sequence ID" value="XM_017019391.1"/>
</dbReference>
<dbReference type="PDB" id="2NRU">
    <property type="method" value="X-ray"/>
    <property type="resolution" value="2.00 A"/>
    <property type="chains" value="A/B/C/D=154-460"/>
</dbReference>
<dbReference type="PDB" id="2NRY">
    <property type="method" value="X-ray"/>
    <property type="resolution" value="2.15 A"/>
    <property type="chains" value="A/B/C/D=154-460"/>
</dbReference>
<dbReference type="PDB" id="2O8Y">
    <property type="method" value="X-ray"/>
    <property type="resolution" value="2.40 A"/>
    <property type="chains" value="A/B=163-460"/>
</dbReference>
<dbReference type="PDB" id="2OIB">
    <property type="method" value="X-ray"/>
    <property type="resolution" value="2.00 A"/>
    <property type="chains" value="A/B/C/D=160-460"/>
</dbReference>
<dbReference type="PDB" id="2OIC">
    <property type="method" value="X-ray"/>
    <property type="resolution" value="2.40 A"/>
    <property type="chains" value="A/B/C/D=160-460"/>
</dbReference>
<dbReference type="PDB" id="2OID">
    <property type="method" value="X-ray"/>
    <property type="resolution" value="2.30 A"/>
    <property type="chains" value="A/B/C/D=160-460"/>
</dbReference>
<dbReference type="PDB" id="3MOP">
    <property type="method" value="X-ray"/>
    <property type="resolution" value="3.40 A"/>
    <property type="chains" value="G/H/I/J=4-106"/>
</dbReference>
<dbReference type="PDB" id="4RMZ">
    <property type="method" value="X-ray"/>
    <property type="resolution" value="2.20 A"/>
    <property type="chains" value="A/B=154-460"/>
</dbReference>
<dbReference type="PDB" id="4U97">
    <property type="method" value="X-ray"/>
    <property type="resolution" value="2.65 A"/>
    <property type="chains" value="A/B=154-460"/>
</dbReference>
<dbReference type="PDB" id="4U9A">
    <property type="method" value="X-ray"/>
    <property type="resolution" value="2.80 A"/>
    <property type="chains" value="A/B=154-460"/>
</dbReference>
<dbReference type="PDB" id="4XS2">
    <property type="method" value="X-ray"/>
    <property type="resolution" value="2.73 A"/>
    <property type="chains" value="A/B/C/D=160-460"/>
</dbReference>
<dbReference type="PDB" id="4Y73">
    <property type="method" value="X-ray"/>
    <property type="resolution" value="2.14 A"/>
    <property type="chains" value="A/B/C/D=160-460"/>
</dbReference>
<dbReference type="PDB" id="4YO6">
    <property type="method" value="X-ray"/>
    <property type="resolution" value="2.32 A"/>
    <property type="chains" value="A/B/C/D=160-460"/>
</dbReference>
<dbReference type="PDB" id="4YP8">
    <property type="method" value="X-ray"/>
    <property type="resolution" value="2.64 A"/>
    <property type="chains" value="A/B/C/D=160-460"/>
</dbReference>
<dbReference type="PDB" id="4ZTL">
    <property type="method" value="X-ray"/>
    <property type="resolution" value="2.39 A"/>
    <property type="chains" value="A/B/C/D=160-460"/>
</dbReference>
<dbReference type="PDB" id="4ZTM">
    <property type="method" value="X-ray"/>
    <property type="resolution" value="2.66 A"/>
    <property type="chains" value="A/B/C/D=160-460"/>
</dbReference>
<dbReference type="PDB" id="4ZTN">
    <property type="method" value="X-ray"/>
    <property type="resolution" value="2.23 A"/>
    <property type="chains" value="A/B/C/D=160-460"/>
</dbReference>
<dbReference type="PDB" id="5K72">
    <property type="method" value="X-ray"/>
    <property type="resolution" value="2.22 A"/>
    <property type="chains" value="A/B/C/D=160-460"/>
</dbReference>
<dbReference type="PDB" id="5K75">
    <property type="method" value="X-ray"/>
    <property type="resolution" value="2.03 A"/>
    <property type="chains" value="A/B/C/D=160-460"/>
</dbReference>
<dbReference type="PDB" id="5K76">
    <property type="method" value="X-ray"/>
    <property type="resolution" value="2.74 A"/>
    <property type="chains" value="A/B=160-460"/>
</dbReference>
<dbReference type="PDB" id="5K7G">
    <property type="method" value="X-ray"/>
    <property type="resolution" value="2.23 A"/>
    <property type="chains" value="A/B/C/D=160-460"/>
</dbReference>
<dbReference type="PDB" id="5K7I">
    <property type="method" value="X-ray"/>
    <property type="resolution" value="2.31 A"/>
    <property type="chains" value="A/B=160-460"/>
</dbReference>
<dbReference type="PDB" id="5KX7">
    <property type="method" value="X-ray"/>
    <property type="resolution" value="2.80 A"/>
    <property type="chains" value="A/B=160-460"/>
</dbReference>
<dbReference type="PDB" id="5KX8">
    <property type="method" value="X-ray"/>
    <property type="resolution" value="2.67 A"/>
    <property type="chains" value="A/B/C/D=160-460"/>
</dbReference>
<dbReference type="PDB" id="5T1S">
    <property type="method" value="X-ray"/>
    <property type="resolution" value="2.30 A"/>
    <property type="chains" value="A/B/C/D=160-460"/>
</dbReference>
<dbReference type="PDB" id="5T1T">
    <property type="method" value="X-ray"/>
    <property type="resolution" value="2.34 A"/>
    <property type="chains" value="A/B/C/D=160-460"/>
</dbReference>
<dbReference type="PDB" id="5UIQ">
    <property type="method" value="X-ray"/>
    <property type="resolution" value="2.64 A"/>
    <property type="chains" value="A/B/C/D=154-460"/>
</dbReference>
<dbReference type="PDB" id="5UIR">
    <property type="method" value="X-ray"/>
    <property type="resolution" value="2.64 A"/>
    <property type="chains" value="A/B=154-460"/>
</dbReference>
<dbReference type="PDB" id="5UIS">
    <property type="method" value="X-ray"/>
    <property type="resolution" value="2.50 A"/>
    <property type="chains" value="A/B/C/D=154-460"/>
</dbReference>
<dbReference type="PDB" id="5UIT">
    <property type="method" value="X-ray"/>
    <property type="resolution" value="1.84 A"/>
    <property type="chains" value="A/B=154-460"/>
</dbReference>
<dbReference type="PDB" id="5UIU">
    <property type="method" value="X-ray"/>
    <property type="resolution" value="2.02 A"/>
    <property type="chains" value="A/B=154-460"/>
</dbReference>
<dbReference type="PDB" id="5W84">
    <property type="method" value="X-ray"/>
    <property type="resolution" value="2.90 A"/>
    <property type="chains" value="A/B=160-460"/>
</dbReference>
<dbReference type="PDB" id="5W85">
    <property type="method" value="X-ray"/>
    <property type="resolution" value="2.25 A"/>
    <property type="chains" value="A/B=160-460"/>
</dbReference>
<dbReference type="PDB" id="6EG9">
    <property type="method" value="X-ray"/>
    <property type="resolution" value="2.41 A"/>
    <property type="chains" value="A/B=154-460"/>
</dbReference>
<dbReference type="PDB" id="6EGA">
    <property type="method" value="X-ray"/>
    <property type="resolution" value="2.51 A"/>
    <property type="chains" value="A/B=154-460"/>
</dbReference>
<dbReference type="PDB" id="6EGD">
    <property type="method" value="X-ray"/>
    <property type="resolution" value="2.10 A"/>
    <property type="chains" value="A/D=164-460"/>
</dbReference>
<dbReference type="PDB" id="6EGE">
    <property type="method" value="X-ray"/>
    <property type="resolution" value="1.40 A"/>
    <property type="chains" value="A/D=164-460"/>
</dbReference>
<dbReference type="PDB" id="6EGF">
    <property type="method" value="X-ray"/>
    <property type="resolution" value="2.61 A"/>
    <property type="chains" value="B=164-460"/>
</dbReference>
<dbReference type="PDB" id="6F3D">
    <property type="method" value="X-ray"/>
    <property type="resolution" value="2.38 A"/>
    <property type="chains" value="A/B=164-458"/>
</dbReference>
<dbReference type="PDB" id="6F3E">
    <property type="method" value="X-ray"/>
    <property type="resolution" value="2.67 A"/>
    <property type="chains" value="A/B=164-458"/>
</dbReference>
<dbReference type="PDB" id="6F3G">
    <property type="method" value="X-ray"/>
    <property type="resolution" value="2.37 A"/>
    <property type="chains" value="A/B=164-458"/>
</dbReference>
<dbReference type="PDB" id="6F3I">
    <property type="method" value="X-ray"/>
    <property type="resolution" value="2.14 A"/>
    <property type="chains" value="A/B=154-460"/>
</dbReference>
<dbReference type="PDB" id="6LXY">
    <property type="method" value="X-ray"/>
    <property type="resolution" value="2.19 A"/>
    <property type="chains" value="A/B/D/E=160-460"/>
</dbReference>
<dbReference type="PDB" id="6MOM">
    <property type="method" value="X-ray"/>
    <property type="resolution" value="2.10 A"/>
    <property type="chains" value="A/B/C/D=160-460"/>
</dbReference>
<dbReference type="PDB" id="6N8G">
    <property type="method" value="X-ray"/>
    <property type="resolution" value="2.00 A"/>
    <property type="chains" value="A/B/C/D=164-460"/>
</dbReference>
<dbReference type="PDB" id="6O8U">
    <property type="method" value="X-ray"/>
    <property type="resolution" value="1.80 A"/>
    <property type="chains" value="A/B/C/D=160-460"/>
</dbReference>
<dbReference type="PDB" id="6O94">
    <property type="method" value="X-ray"/>
    <property type="resolution" value="1.98 A"/>
    <property type="chains" value="A/B/C/D=160-460"/>
</dbReference>
<dbReference type="PDB" id="6O95">
    <property type="method" value="X-ray"/>
    <property type="resolution" value="1.77 A"/>
    <property type="chains" value="A/B/C/D=160-460"/>
</dbReference>
<dbReference type="PDB" id="6O9D">
    <property type="method" value="X-ray"/>
    <property type="resolution" value="2.51 A"/>
    <property type="chains" value="A/B/C/D=160-460"/>
</dbReference>
<dbReference type="PDB" id="6RFI">
    <property type="method" value="X-ray"/>
    <property type="resolution" value="2.31 A"/>
    <property type="chains" value="A/B=154-460"/>
</dbReference>
<dbReference type="PDB" id="6RFJ">
    <property type="method" value="X-ray"/>
    <property type="resolution" value="2.61 A"/>
    <property type="chains" value="A/B=154-460"/>
</dbReference>
<dbReference type="PDB" id="6THW">
    <property type="method" value="X-ray"/>
    <property type="resolution" value="2.44 A"/>
    <property type="chains" value="A/B=154-460"/>
</dbReference>
<dbReference type="PDB" id="6THX">
    <property type="method" value="X-ray"/>
    <property type="resolution" value="1.99 A"/>
    <property type="chains" value="A/B=154-460"/>
</dbReference>
<dbReference type="PDB" id="6THZ">
    <property type="method" value="X-ray"/>
    <property type="resolution" value="2.38 A"/>
    <property type="chains" value="A/B=154-460"/>
</dbReference>
<dbReference type="PDB" id="6TI8">
    <property type="method" value="X-ray"/>
    <property type="resolution" value="2.32 A"/>
    <property type="chains" value="A/B/C/D=154-460"/>
</dbReference>
<dbReference type="PDB" id="6TIA">
    <property type="method" value="X-ray"/>
    <property type="resolution" value="2.52 A"/>
    <property type="chains" value="A/B=154-460"/>
</dbReference>
<dbReference type="PDB" id="6UYA">
    <property type="method" value="X-ray"/>
    <property type="resolution" value="1.74 A"/>
    <property type="chains" value="A/B/C/D=160-460"/>
</dbReference>
<dbReference type="PDB" id="6VQL">
    <property type="method" value="X-ray"/>
    <property type="resolution" value="2.07 A"/>
    <property type="chains" value="A/B/C/D=160-460"/>
</dbReference>
<dbReference type="PDB" id="7C2V">
    <property type="method" value="X-ray"/>
    <property type="resolution" value="2.44 A"/>
    <property type="chains" value="A/B/C/D=162-460"/>
</dbReference>
<dbReference type="PDB" id="7C2W">
    <property type="method" value="X-ray"/>
    <property type="resolution" value="3.20 A"/>
    <property type="chains" value="A/B/C/D=163-458"/>
</dbReference>
<dbReference type="PDB" id="7QG1">
    <property type="method" value="X-ray"/>
    <property type="resolution" value="2.07 A"/>
    <property type="chains" value="A/B=154-460"/>
</dbReference>
<dbReference type="PDB" id="7QG2">
    <property type="method" value="X-ray"/>
    <property type="resolution" value="3.03 A"/>
    <property type="chains" value="A/B/C/D=154-460"/>
</dbReference>
<dbReference type="PDB" id="7QG3">
    <property type="method" value="X-ray"/>
    <property type="resolution" value="2.11 A"/>
    <property type="chains" value="A/B=154-460"/>
</dbReference>
<dbReference type="PDB" id="7QG5">
    <property type="method" value="X-ray"/>
    <property type="resolution" value="2.30 A"/>
    <property type="chains" value="A/B=154-460"/>
</dbReference>
<dbReference type="PDB" id="8ATB">
    <property type="method" value="X-ray"/>
    <property type="resolution" value="2.35 A"/>
    <property type="chains" value="AAA/BBB=165-460"/>
</dbReference>
<dbReference type="PDB" id="8ATL">
    <property type="method" value="X-ray"/>
    <property type="resolution" value="2.46 A"/>
    <property type="chains" value="AAA/BBB=165-460"/>
</dbReference>
<dbReference type="PDB" id="8ATN">
    <property type="method" value="X-ray"/>
    <property type="resolution" value="2.17 A"/>
    <property type="chains" value="AAA/BBB=165-460"/>
</dbReference>
<dbReference type="PDB" id="8BR5">
    <property type="method" value="X-ray"/>
    <property type="resolution" value="2.70 A"/>
    <property type="chains" value="AAA/BBB/CCC/DDD=162-460"/>
</dbReference>
<dbReference type="PDB" id="8BR6">
    <property type="method" value="X-ray"/>
    <property type="resolution" value="2.17 A"/>
    <property type="chains" value="AAA/BBB=165-460"/>
</dbReference>
<dbReference type="PDB" id="8BR7">
    <property type="method" value="X-ray"/>
    <property type="resolution" value="2.12 A"/>
    <property type="chains" value="AAA/BBB=165-460"/>
</dbReference>
<dbReference type="PDB" id="8DKS">
    <property type="method" value="X-ray"/>
    <property type="resolution" value="2.45 A"/>
    <property type="chains" value="A/B=1-460"/>
</dbReference>
<dbReference type="PDB" id="8SCE">
    <property type="method" value="X-ray"/>
    <property type="resolution" value="1.89 A"/>
    <property type="chains" value="A/B/D/E=160-460"/>
</dbReference>
<dbReference type="PDB" id="8SCV">
    <property type="method" value="X-ray"/>
    <property type="resolution" value="2.69 A"/>
    <property type="chains" value="A/B=160-460"/>
</dbReference>
<dbReference type="PDB" id="8SCW">
    <property type="method" value="X-ray"/>
    <property type="resolution" value="2.76 A"/>
    <property type="chains" value="A/B/C/D=160-460"/>
</dbReference>
<dbReference type="PDB" id="8TVM">
    <property type="method" value="X-ray"/>
    <property type="resolution" value="2.10 A"/>
    <property type="chains" value="A/B/C/D=154-460"/>
</dbReference>
<dbReference type="PDB" id="8TVN">
    <property type="method" value="X-ray"/>
    <property type="resolution" value="1.95 A"/>
    <property type="chains" value="A/B/C/D=154-460"/>
</dbReference>
<dbReference type="PDB" id="8TX0">
    <property type="method" value="X-ray"/>
    <property type="resolution" value="2.00 A"/>
    <property type="chains" value="A/B=154-460"/>
</dbReference>
<dbReference type="PDB" id="8UCB">
    <property type="method" value="X-ray"/>
    <property type="resolution" value="1.85 A"/>
    <property type="chains" value="A/B/C/D=154-460"/>
</dbReference>
<dbReference type="PDB" id="8UCC">
    <property type="method" value="X-ray"/>
    <property type="resolution" value="1.80 A"/>
    <property type="chains" value="A/B=154-460"/>
</dbReference>
<dbReference type="PDB" id="8V1O">
    <property type="method" value="X-ray"/>
    <property type="resolution" value="2.92 A"/>
    <property type="chains" value="A/B/C/D=160-460"/>
</dbReference>
<dbReference type="PDB" id="8V2F">
    <property type="method" value="X-ray"/>
    <property type="resolution" value="2.09 A"/>
    <property type="chains" value="A/B/C/D=160-460"/>
</dbReference>
<dbReference type="PDB" id="8V2L">
    <property type="method" value="X-ray"/>
    <property type="resolution" value="2.43 A"/>
    <property type="chains" value="A/B/C/D=160-460"/>
</dbReference>
<dbReference type="PDB" id="8W3W">
    <property type="method" value="X-ray"/>
    <property type="resolution" value="1.98 A"/>
    <property type="chains" value="A/B/C/D=154-460"/>
</dbReference>
<dbReference type="PDB" id="8W3X">
    <property type="method" value="X-ray"/>
    <property type="resolution" value="1.76 A"/>
    <property type="chains" value="A/B/C/D=154-460"/>
</dbReference>
<dbReference type="PDB" id="8WTF">
    <property type="method" value="X-ray"/>
    <property type="resolution" value="2.00 A"/>
    <property type="chains" value="A=164-460"/>
</dbReference>
<dbReference type="PDBsum" id="2NRU"/>
<dbReference type="PDBsum" id="2NRY"/>
<dbReference type="PDBsum" id="2O8Y"/>
<dbReference type="PDBsum" id="2OIB"/>
<dbReference type="PDBsum" id="2OIC"/>
<dbReference type="PDBsum" id="2OID"/>
<dbReference type="PDBsum" id="3MOP"/>
<dbReference type="PDBsum" id="4RMZ"/>
<dbReference type="PDBsum" id="4U97"/>
<dbReference type="PDBsum" id="4U9A"/>
<dbReference type="PDBsum" id="4XS2"/>
<dbReference type="PDBsum" id="4Y73"/>
<dbReference type="PDBsum" id="4YO6"/>
<dbReference type="PDBsum" id="4YP8"/>
<dbReference type="PDBsum" id="4ZTL"/>
<dbReference type="PDBsum" id="4ZTM"/>
<dbReference type="PDBsum" id="4ZTN"/>
<dbReference type="PDBsum" id="5K72"/>
<dbReference type="PDBsum" id="5K75"/>
<dbReference type="PDBsum" id="5K76"/>
<dbReference type="PDBsum" id="5K7G"/>
<dbReference type="PDBsum" id="5K7I"/>
<dbReference type="PDBsum" id="5KX7"/>
<dbReference type="PDBsum" id="5KX8"/>
<dbReference type="PDBsum" id="5T1S"/>
<dbReference type="PDBsum" id="5T1T"/>
<dbReference type="PDBsum" id="5UIQ"/>
<dbReference type="PDBsum" id="5UIR"/>
<dbReference type="PDBsum" id="5UIS"/>
<dbReference type="PDBsum" id="5UIT"/>
<dbReference type="PDBsum" id="5UIU"/>
<dbReference type="PDBsum" id="5W84"/>
<dbReference type="PDBsum" id="5W85"/>
<dbReference type="PDBsum" id="6EG9"/>
<dbReference type="PDBsum" id="6EGA"/>
<dbReference type="PDBsum" id="6EGD"/>
<dbReference type="PDBsum" id="6EGE"/>
<dbReference type="PDBsum" id="6EGF"/>
<dbReference type="PDBsum" id="6F3D"/>
<dbReference type="PDBsum" id="6F3E"/>
<dbReference type="PDBsum" id="6F3G"/>
<dbReference type="PDBsum" id="6F3I"/>
<dbReference type="PDBsum" id="6LXY"/>
<dbReference type="PDBsum" id="6MOM"/>
<dbReference type="PDBsum" id="6N8G"/>
<dbReference type="PDBsum" id="6O8U"/>
<dbReference type="PDBsum" id="6O94"/>
<dbReference type="PDBsum" id="6O95"/>
<dbReference type="PDBsum" id="6O9D"/>
<dbReference type="PDBsum" id="6RFI"/>
<dbReference type="PDBsum" id="6RFJ"/>
<dbReference type="PDBsum" id="6THW"/>
<dbReference type="PDBsum" id="6THX"/>
<dbReference type="PDBsum" id="6THZ"/>
<dbReference type="PDBsum" id="6TI8"/>
<dbReference type="PDBsum" id="6TIA"/>
<dbReference type="PDBsum" id="6UYA"/>
<dbReference type="PDBsum" id="6VQL"/>
<dbReference type="PDBsum" id="7C2V"/>
<dbReference type="PDBsum" id="7C2W"/>
<dbReference type="PDBsum" id="7QG1"/>
<dbReference type="PDBsum" id="7QG2"/>
<dbReference type="PDBsum" id="7QG3"/>
<dbReference type="PDBsum" id="7QG5"/>
<dbReference type="PDBsum" id="8ATB"/>
<dbReference type="PDBsum" id="8ATL"/>
<dbReference type="PDBsum" id="8ATN"/>
<dbReference type="PDBsum" id="8BR5"/>
<dbReference type="PDBsum" id="8BR6"/>
<dbReference type="PDBsum" id="8BR7"/>
<dbReference type="PDBsum" id="8DKS"/>
<dbReference type="PDBsum" id="8SCE"/>
<dbReference type="PDBsum" id="8SCV"/>
<dbReference type="PDBsum" id="8SCW"/>
<dbReference type="PDBsum" id="8TVM"/>
<dbReference type="PDBsum" id="8TVN"/>
<dbReference type="PDBsum" id="8TX0"/>
<dbReference type="PDBsum" id="8UCB"/>
<dbReference type="PDBsum" id="8UCC"/>
<dbReference type="PDBsum" id="8V1O"/>
<dbReference type="PDBsum" id="8V2F"/>
<dbReference type="PDBsum" id="8V2L"/>
<dbReference type="PDBsum" id="8W3W"/>
<dbReference type="PDBsum" id="8W3X"/>
<dbReference type="PDBsum" id="8WTF"/>
<dbReference type="SMR" id="Q9NWZ3"/>
<dbReference type="BioGRID" id="119322">
    <property type="interactions" value="45"/>
</dbReference>
<dbReference type="ComplexPortal" id="CPX-10281">
    <property type="entry name" value="Myddosome core complex"/>
</dbReference>
<dbReference type="CORUM" id="Q9NWZ3"/>
<dbReference type="DIP" id="DIP-31351N"/>
<dbReference type="FunCoup" id="Q9NWZ3">
    <property type="interactions" value="2389"/>
</dbReference>
<dbReference type="IntAct" id="Q9NWZ3">
    <property type="interactions" value="23"/>
</dbReference>
<dbReference type="MINT" id="Q9NWZ3"/>
<dbReference type="STRING" id="9606.ENSP00000479889"/>
<dbReference type="BindingDB" id="Q9NWZ3"/>
<dbReference type="ChEMBL" id="CHEMBL3778"/>
<dbReference type="DrugBank" id="DB08590">
    <property type="generic name" value="1-(3-HYDROXYPROPYL)-2-[(3-NITROBENZOYL)AMINO]-1H-BENZIMIDAZOL-5-YL PIVALATE"/>
</dbReference>
<dbReference type="DrugBank" id="DB12010">
    <property type="generic name" value="Fostamatinib"/>
</dbReference>
<dbReference type="DrugBank" id="DB18767">
    <property type="generic name" value="Zabedosertib"/>
</dbReference>
<dbReference type="DrugCentral" id="Q9NWZ3"/>
<dbReference type="GuidetoPHARMACOLOGY" id="2045"/>
<dbReference type="GlyGen" id="Q9NWZ3">
    <property type="glycosylation" value="3 sites, 6 N-linked glycans (1 site), 1 O-linked glycan (1 site)"/>
</dbReference>
<dbReference type="iPTMnet" id="Q9NWZ3"/>
<dbReference type="PhosphoSitePlus" id="Q9NWZ3"/>
<dbReference type="BioMuta" id="IRAK4"/>
<dbReference type="DMDM" id="50401181"/>
<dbReference type="CPTAC" id="CPTAC-2956"/>
<dbReference type="CPTAC" id="CPTAC-2957"/>
<dbReference type="jPOST" id="Q9NWZ3"/>
<dbReference type="MassIVE" id="Q9NWZ3"/>
<dbReference type="PaxDb" id="9606-ENSP00000390651"/>
<dbReference type="PeptideAtlas" id="Q9NWZ3"/>
<dbReference type="ProteomicsDB" id="83000">
    <molecule id="Q9NWZ3-1"/>
</dbReference>
<dbReference type="ProteomicsDB" id="83001">
    <molecule id="Q9NWZ3-2"/>
</dbReference>
<dbReference type="Pumba" id="Q9NWZ3"/>
<dbReference type="Antibodypedia" id="696">
    <property type="antibodies" value="776 antibodies from 42 providers"/>
</dbReference>
<dbReference type="DNASU" id="51135"/>
<dbReference type="Ensembl" id="ENST00000440781.6">
    <molecule id="Q9NWZ3-2"/>
    <property type="protein sequence ID" value="ENSP00000408734.2"/>
    <property type="gene ID" value="ENSG00000198001.16"/>
</dbReference>
<dbReference type="Ensembl" id="ENST00000551736.5">
    <molecule id="Q9NWZ3-1"/>
    <property type="protein sequence ID" value="ENSP00000446490.1"/>
    <property type="gene ID" value="ENSG00000198001.16"/>
</dbReference>
<dbReference type="Ensembl" id="ENST00000613694.5">
    <molecule id="Q9NWZ3-1"/>
    <property type="protein sequence ID" value="ENSP00000479889.3"/>
    <property type="gene ID" value="ENSG00000198001.16"/>
</dbReference>
<dbReference type="GeneID" id="51135"/>
<dbReference type="KEGG" id="hsa:51135"/>
<dbReference type="MANE-Select" id="ENST00000613694.5">
    <property type="protein sequence ID" value="ENSP00000479889.3"/>
    <property type="RefSeq nucleotide sequence ID" value="NM_016123.4"/>
    <property type="RefSeq protein sequence ID" value="NP_057207.2"/>
</dbReference>
<dbReference type="UCSC" id="uc001rnt.4">
    <molecule id="Q9NWZ3-1"/>
    <property type="organism name" value="human"/>
</dbReference>
<dbReference type="AGR" id="HGNC:17967"/>
<dbReference type="CTD" id="51135"/>
<dbReference type="DisGeNET" id="51135"/>
<dbReference type="GeneCards" id="IRAK4"/>
<dbReference type="HGNC" id="HGNC:17967">
    <property type="gene designation" value="IRAK4"/>
</dbReference>
<dbReference type="HPA" id="ENSG00000198001">
    <property type="expression patterns" value="Low tissue specificity"/>
</dbReference>
<dbReference type="MalaCards" id="IRAK4"/>
<dbReference type="MIM" id="606883">
    <property type="type" value="gene"/>
</dbReference>
<dbReference type="MIM" id="607676">
    <property type="type" value="phenotype"/>
</dbReference>
<dbReference type="neXtProt" id="NX_Q9NWZ3"/>
<dbReference type="OpenTargets" id="ENSG00000198001"/>
<dbReference type="Orphanet" id="70592">
    <property type="disease" value="Transient predisposition to invasive pyogenic bacterial infection"/>
</dbReference>
<dbReference type="PharmGKB" id="PA134914577"/>
<dbReference type="VEuPathDB" id="HostDB:ENSG00000198001"/>
<dbReference type="eggNOG" id="KOG1187">
    <property type="taxonomic scope" value="Eukaryota"/>
</dbReference>
<dbReference type="GeneTree" id="ENSGT00940000158792"/>
<dbReference type="HOGENOM" id="CLU_000288_21_4_1"/>
<dbReference type="InParanoid" id="Q9NWZ3"/>
<dbReference type="OMA" id="MQHYQSM"/>
<dbReference type="OrthoDB" id="4062651at2759"/>
<dbReference type="PAN-GO" id="Q9NWZ3">
    <property type="GO annotations" value="7 GO annotations based on evolutionary models"/>
</dbReference>
<dbReference type="PhylomeDB" id="Q9NWZ3"/>
<dbReference type="TreeFam" id="TF351380"/>
<dbReference type="PathwayCommons" id="Q9NWZ3"/>
<dbReference type="Reactome" id="R-HSA-1257604">
    <property type="pathway name" value="PIP3 activates AKT signaling"/>
</dbReference>
<dbReference type="Reactome" id="R-HSA-166058">
    <property type="pathway name" value="MyD88:MAL(TIRAP) cascade initiated on plasma membrane"/>
</dbReference>
<dbReference type="Reactome" id="R-HSA-5603037">
    <property type="pathway name" value="IRAK4 deficiency (TLR5)"/>
</dbReference>
<dbReference type="Reactome" id="R-HSA-5603041">
    <property type="pathway name" value="IRAK4 deficiency (TLR2/4)"/>
</dbReference>
<dbReference type="Reactome" id="R-HSA-6811558">
    <property type="pathway name" value="PI5P, PP2A and IER3 Regulate PI3K/AKT Signaling"/>
</dbReference>
<dbReference type="Reactome" id="R-HSA-9020702">
    <property type="pathway name" value="Interleukin-1 signaling"/>
</dbReference>
<dbReference type="Reactome" id="R-HSA-975110">
    <property type="pathway name" value="TRAF6 mediated IRF7 activation in TLR7/8 or 9 signaling"/>
</dbReference>
<dbReference type="Reactome" id="R-HSA-975138">
    <property type="pathway name" value="TRAF6 mediated induction of NFkB and MAP kinases upon TLR7/8 or 9 activation"/>
</dbReference>
<dbReference type="Reactome" id="R-HSA-975155">
    <property type="pathway name" value="MyD88 dependent cascade initiated on endosome"/>
</dbReference>
<dbReference type="Reactome" id="R-HSA-975871">
    <property type="pathway name" value="MyD88 cascade initiated on plasma membrane"/>
</dbReference>
<dbReference type="SABIO-RK" id="Q9NWZ3"/>
<dbReference type="SignaLink" id="Q9NWZ3"/>
<dbReference type="SIGNOR" id="Q9NWZ3"/>
<dbReference type="BioGRID-ORCS" id="51135">
    <property type="hits" value="17 hits in 1152 CRISPR screens"/>
</dbReference>
<dbReference type="ChiTaRS" id="IRAK4">
    <property type="organism name" value="human"/>
</dbReference>
<dbReference type="EvolutionaryTrace" id="Q9NWZ3"/>
<dbReference type="GenomeRNAi" id="51135"/>
<dbReference type="Pharos" id="Q9NWZ3">
    <property type="development level" value="Tchem"/>
</dbReference>
<dbReference type="PRO" id="PR:Q9NWZ3"/>
<dbReference type="Proteomes" id="UP000005640">
    <property type="component" value="Chromosome 12"/>
</dbReference>
<dbReference type="RNAct" id="Q9NWZ3">
    <property type="molecule type" value="protein"/>
</dbReference>
<dbReference type="Bgee" id="ENSG00000198001">
    <property type="expression patterns" value="Expressed in monocyte and 151 other cell types or tissues"/>
</dbReference>
<dbReference type="ExpressionAtlas" id="Q9NWZ3">
    <property type="expression patterns" value="baseline and differential"/>
</dbReference>
<dbReference type="GO" id="GO:0009986">
    <property type="term" value="C:cell surface"/>
    <property type="evidence" value="ECO:0000314"/>
    <property type="project" value="UniProt"/>
</dbReference>
<dbReference type="GO" id="GO:0005737">
    <property type="term" value="C:cytoplasm"/>
    <property type="evidence" value="ECO:0000318"/>
    <property type="project" value="GO_Central"/>
</dbReference>
<dbReference type="GO" id="GO:0005829">
    <property type="term" value="C:cytosol"/>
    <property type="evidence" value="ECO:0000304"/>
    <property type="project" value="Reactome"/>
</dbReference>
<dbReference type="GO" id="GO:0010008">
    <property type="term" value="C:endosome membrane"/>
    <property type="evidence" value="ECO:0000304"/>
    <property type="project" value="Reactome"/>
</dbReference>
<dbReference type="GO" id="GO:0005615">
    <property type="term" value="C:extracellular space"/>
    <property type="evidence" value="ECO:0007669"/>
    <property type="project" value="Ensembl"/>
</dbReference>
<dbReference type="GO" id="GO:0019897">
    <property type="term" value="C:extrinsic component of plasma membrane"/>
    <property type="evidence" value="ECO:0000305"/>
    <property type="project" value="UniProt"/>
</dbReference>
<dbReference type="GO" id="GO:0005634">
    <property type="term" value="C:nucleus"/>
    <property type="evidence" value="ECO:0000318"/>
    <property type="project" value="GO_Central"/>
</dbReference>
<dbReference type="GO" id="GO:0005886">
    <property type="term" value="C:plasma membrane"/>
    <property type="evidence" value="ECO:0000318"/>
    <property type="project" value="GO_Central"/>
</dbReference>
<dbReference type="GO" id="GO:0005524">
    <property type="term" value="F:ATP binding"/>
    <property type="evidence" value="ECO:0007669"/>
    <property type="project" value="UniProtKB-KW"/>
</dbReference>
<dbReference type="GO" id="GO:0005149">
    <property type="term" value="F:interleukin-1 receptor binding"/>
    <property type="evidence" value="ECO:0007669"/>
    <property type="project" value="Ensembl"/>
</dbReference>
<dbReference type="GO" id="GO:0016301">
    <property type="term" value="F:kinase activity"/>
    <property type="evidence" value="ECO:0000314"/>
    <property type="project" value="UniProt"/>
</dbReference>
<dbReference type="GO" id="GO:0000287">
    <property type="term" value="F:magnesium ion binding"/>
    <property type="evidence" value="ECO:0007669"/>
    <property type="project" value="InterPro"/>
</dbReference>
<dbReference type="GO" id="GO:0019901">
    <property type="term" value="F:protein kinase binding"/>
    <property type="evidence" value="ECO:0000353"/>
    <property type="project" value="UniProtKB"/>
</dbReference>
<dbReference type="GO" id="GO:0106310">
    <property type="term" value="F:protein serine kinase activity"/>
    <property type="evidence" value="ECO:0007669"/>
    <property type="project" value="RHEA"/>
</dbReference>
<dbReference type="GO" id="GO:0004674">
    <property type="term" value="F:protein serine/threonine kinase activity"/>
    <property type="evidence" value="ECO:0000314"/>
    <property type="project" value="UniProt"/>
</dbReference>
<dbReference type="GO" id="GO:0019221">
    <property type="term" value="P:cytokine-mediated signaling pathway"/>
    <property type="evidence" value="ECO:0000318"/>
    <property type="project" value="GO_Central"/>
</dbReference>
<dbReference type="GO" id="GO:0045087">
    <property type="term" value="P:innate immune response"/>
    <property type="evidence" value="ECO:0000304"/>
    <property type="project" value="UniProtKB"/>
</dbReference>
<dbReference type="GO" id="GO:0070498">
    <property type="term" value="P:interleukin-1-mediated signaling pathway"/>
    <property type="evidence" value="ECO:0000314"/>
    <property type="project" value="UniProt"/>
</dbReference>
<dbReference type="GO" id="GO:0038172">
    <property type="term" value="P:interleukin-33-mediated signaling pathway"/>
    <property type="evidence" value="ECO:0000314"/>
    <property type="project" value="UniProt"/>
</dbReference>
<dbReference type="GO" id="GO:0035556">
    <property type="term" value="P:intracellular signal transduction"/>
    <property type="evidence" value="ECO:0000318"/>
    <property type="project" value="GO_Central"/>
</dbReference>
<dbReference type="GO" id="GO:0007254">
    <property type="term" value="P:JNK cascade"/>
    <property type="evidence" value="ECO:0007669"/>
    <property type="project" value="Ensembl"/>
</dbReference>
<dbReference type="GO" id="GO:0031663">
    <property type="term" value="P:lipopolysaccharide-mediated signaling pathway"/>
    <property type="evidence" value="ECO:0000318"/>
    <property type="project" value="GO_Central"/>
</dbReference>
<dbReference type="GO" id="GO:0002755">
    <property type="term" value="P:MyD88-dependent toll-like receptor signaling pathway"/>
    <property type="evidence" value="ECO:0000304"/>
    <property type="project" value="UniProtKB"/>
</dbReference>
<dbReference type="GO" id="GO:0002446">
    <property type="term" value="P:neutrophil mediated immunity"/>
    <property type="evidence" value="ECO:0000315"/>
    <property type="project" value="UniProtKB"/>
</dbReference>
<dbReference type="GO" id="GO:1990266">
    <property type="term" value="P:neutrophil migration"/>
    <property type="evidence" value="ECO:0000315"/>
    <property type="project" value="UniProtKB"/>
</dbReference>
<dbReference type="GO" id="GO:0043123">
    <property type="term" value="P:positive regulation of canonical NF-kappaB signal transduction"/>
    <property type="evidence" value="ECO:0000315"/>
    <property type="project" value="MGI"/>
</dbReference>
<dbReference type="GO" id="GO:0048661">
    <property type="term" value="P:positive regulation of smooth muscle cell proliferation"/>
    <property type="evidence" value="ECO:0007669"/>
    <property type="project" value="Ensembl"/>
</dbReference>
<dbReference type="GO" id="GO:0008063">
    <property type="term" value="P:Toll signaling pathway"/>
    <property type="evidence" value="ECO:0000318"/>
    <property type="project" value="GO_Central"/>
</dbReference>
<dbReference type="GO" id="GO:0034142">
    <property type="term" value="P:toll-like receptor 4 signaling pathway"/>
    <property type="evidence" value="ECO:0000305"/>
    <property type="project" value="UniProt"/>
</dbReference>
<dbReference type="GO" id="GO:0034162">
    <property type="term" value="P:toll-like receptor 9 signaling pathway"/>
    <property type="evidence" value="ECO:0000304"/>
    <property type="project" value="Reactome"/>
</dbReference>
<dbReference type="GO" id="GO:0002224">
    <property type="term" value="P:toll-like receptor signaling pathway"/>
    <property type="evidence" value="ECO:0000304"/>
    <property type="project" value="UniProtKB"/>
</dbReference>
<dbReference type="CDD" id="cd08793">
    <property type="entry name" value="Death_IRAK4"/>
    <property type="match status" value="1"/>
</dbReference>
<dbReference type="CDD" id="cd14158">
    <property type="entry name" value="STKc_IRAK4"/>
    <property type="match status" value="1"/>
</dbReference>
<dbReference type="FunFam" id="1.10.533.10:FF:000028">
    <property type="entry name" value="Interleukin 1 receptor-associated kinase 4"/>
    <property type="match status" value="1"/>
</dbReference>
<dbReference type="FunFam" id="1.10.510.10:FF:000414">
    <property type="entry name" value="Interleukin-1 receptor-associated kinase 4"/>
    <property type="match status" value="1"/>
</dbReference>
<dbReference type="FunFam" id="3.30.200.20:FF:000368">
    <property type="entry name" value="Interleukin-1 receptor-associated kinase 4"/>
    <property type="match status" value="1"/>
</dbReference>
<dbReference type="Gene3D" id="1.10.533.10">
    <property type="entry name" value="Death Domain, Fas"/>
    <property type="match status" value="1"/>
</dbReference>
<dbReference type="Gene3D" id="3.30.200.20">
    <property type="entry name" value="Phosphorylase Kinase, domain 1"/>
    <property type="match status" value="1"/>
</dbReference>
<dbReference type="Gene3D" id="1.10.510.10">
    <property type="entry name" value="Transferase(Phosphotransferase) domain 1"/>
    <property type="match status" value="1"/>
</dbReference>
<dbReference type="InterPro" id="IPR011029">
    <property type="entry name" value="DEATH-like_dom_sf"/>
</dbReference>
<dbReference type="InterPro" id="IPR017428">
    <property type="entry name" value="IRAK4"/>
</dbReference>
<dbReference type="InterPro" id="IPR037970">
    <property type="entry name" value="IRAK4_Death"/>
</dbReference>
<dbReference type="InterPro" id="IPR011009">
    <property type="entry name" value="Kinase-like_dom_sf"/>
</dbReference>
<dbReference type="InterPro" id="IPR051824">
    <property type="entry name" value="LRR_Rcpt-Like_S/T_Kinase"/>
</dbReference>
<dbReference type="InterPro" id="IPR000719">
    <property type="entry name" value="Prot_kinase_dom"/>
</dbReference>
<dbReference type="InterPro" id="IPR001245">
    <property type="entry name" value="Ser-Thr/Tyr_kinase_cat_dom"/>
</dbReference>
<dbReference type="PANTHER" id="PTHR48006">
    <property type="entry name" value="LEUCINE-RICH REPEAT-CONTAINING PROTEIN DDB_G0281931-RELATED"/>
    <property type="match status" value="1"/>
</dbReference>
<dbReference type="PANTHER" id="PTHR48006:SF102">
    <property type="entry name" value="LEUCINE-RICH REPEAT-CONTAINING PROTEIN DDB_G0281931-RELATED"/>
    <property type="match status" value="1"/>
</dbReference>
<dbReference type="Pfam" id="PF07714">
    <property type="entry name" value="PK_Tyr_Ser-Thr"/>
    <property type="match status" value="1"/>
</dbReference>
<dbReference type="PIRSF" id="PIRSF038189">
    <property type="entry name" value="IRAK4"/>
    <property type="match status" value="1"/>
</dbReference>
<dbReference type="SMART" id="SM00220">
    <property type="entry name" value="S_TKc"/>
    <property type="match status" value="1"/>
</dbReference>
<dbReference type="SUPFAM" id="SSF47986">
    <property type="entry name" value="DEATH domain"/>
    <property type="match status" value="1"/>
</dbReference>
<dbReference type="SUPFAM" id="SSF56112">
    <property type="entry name" value="Protein kinase-like (PK-like)"/>
    <property type="match status" value="1"/>
</dbReference>
<dbReference type="PROSITE" id="PS50011">
    <property type="entry name" value="PROTEIN_KINASE_DOM"/>
    <property type="match status" value="1"/>
</dbReference>
<keyword id="KW-0002">3D-structure</keyword>
<keyword id="KW-0007">Acetylation</keyword>
<keyword id="KW-0025">Alternative splicing</keyword>
<keyword id="KW-0067">ATP-binding</keyword>
<keyword id="KW-0963">Cytoplasm</keyword>
<keyword id="KW-0225">Disease variant</keyword>
<keyword id="KW-0391">Immunity</keyword>
<keyword id="KW-0399">Innate immunity</keyword>
<keyword id="KW-0418">Kinase</keyword>
<keyword id="KW-0460">Magnesium</keyword>
<keyword id="KW-0547">Nucleotide-binding</keyword>
<keyword id="KW-0597">Phosphoprotein</keyword>
<keyword id="KW-1267">Proteomics identification</keyword>
<keyword id="KW-1185">Reference proteome</keyword>
<keyword id="KW-0723">Serine/threonine-protein kinase</keyword>
<keyword id="KW-0808">Transferase</keyword>
<sequence length="460" mass="51530">MNKPITPSTYVRCLNVGLIRKLSDFIDPQEGWKKLAVAIKKPSGDDRYNQFHIRRFEALLQTGKSPTSELLFDWGTTNCTVGDLVDLLIQNEFFAPASLLLPDAVPKTANTLPSKEAITVQQKQMPFCDKDRTLMTPVQNLEQSYMPPDSSSPENKSLEVSDTRFHSFSFYELKNVTNNFDERPISVGGNKMGEGGFGVVYKGYVNNTTVAVKKLAAMVDITTEELKQQFDQEIKVMAKCQHENLVELLGFSSDGDDLCLVYVYMPNGSLLDRLSCLDGTPPLSWHMRCKIAQGAANGINFLHENHHIHRDIKSANILLDEAFTAKISDFGLARASEKFAQTVMTSRIVGTTAYMAPEALRGEITPKSDIYSFGVVLLEIITGLPAVDEHREPQLLLDIKEEIEDEEKTIEDYIDKKMNDADSTSVEAMYSVASQCLHEKKNKRPDIKKVQQLLQEMTAS</sequence>